<organism>
    <name type="scientific">Homo sapiens</name>
    <name type="common">Human</name>
    <dbReference type="NCBI Taxonomy" id="9606"/>
    <lineage>
        <taxon>Eukaryota</taxon>
        <taxon>Metazoa</taxon>
        <taxon>Chordata</taxon>
        <taxon>Craniata</taxon>
        <taxon>Vertebrata</taxon>
        <taxon>Euteleostomi</taxon>
        <taxon>Mammalia</taxon>
        <taxon>Eutheria</taxon>
        <taxon>Euarchontoglires</taxon>
        <taxon>Primates</taxon>
        <taxon>Haplorrhini</taxon>
        <taxon>Catarrhini</taxon>
        <taxon>Hominidae</taxon>
        <taxon>Homo</taxon>
    </lineage>
</organism>
<protein>
    <recommendedName>
        <fullName evidence="73">Sodium channel protein type 2 subunit alpha</fullName>
    </recommendedName>
    <alternativeName>
        <fullName>HBSC II</fullName>
    </alternativeName>
    <alternativeName>
        <fullName>Sodium channel protein brain II subunit alpha</fullName>
    </alternativeName>
    <alternativeName>
        <fullName>Sodium channel protein type II subunit alpha</fullName>
    </alternativeName>
    <alternativeName>
        <fullName>Voltage-gated sodium channel subunit alpha Nav1.2</fullName>
    </alternativeName>
</protein>
<feature type="chain" id="PRO_0000048491" description="Sodium channel protein type 2 subunit alpha">
    <location>
        <begin position="1"/>
        <end position="2005"/>
    </location>
</feature>
<feature type="topological domain" description="Cytoplasmic" evidence="73">
    <location>
        <begin position="1"/>
        <end position="129"/>
    </location>
</feature>
<feature type="transmembrane region" description="Helical; Name=S1 of repeat I" evidence="3">
    <location>
        <begin position="130"/>
        <end position="148"/>
    </location>
</feature>
<feature type="topological domain" description="Extracellular" evidence="73">
    <location>
        <begin position="149"/>
        <end position="155"/>
    </location>
</feature>
<feature type="transmembrane region" description="Helical; Name=S2 of repeat I" evidence="3">
    <location>
        <begin position="156"/>
        <end position="176"/>
    </location>
</feature>
<feature type="topological domain" description="Cytoplasmic" evidence="73">
    <location>
        <begin position="177"/>
        <end position="190"/>
    </location>
</feature>
<feature type="transmembrane region" description="Helical; Name=S3 of repeat I" evidence="3">
    <location>
        <begin position="191"/>
        <end position="208"/>
    </location>
</feature>
<feature type="topological domain" description="Extracellular" evidence="73">
    <location>
        <begin position="209"/>
        <end position="214"/>
    </location>
</feature>
<feature type="transmembrane region" description="Helical; Name=S4 of repeat I" evidence="3">
    <location>
        <begin position="215"/>
        <end position="231"/>
    </location>
</feature>
<feature type="topological domain" description="Cytoplasmic" evidence="73">
    <location>
        <begin position="232"/>
        <end position="250"/>
    </location>
</feature>
<feature type="transmembrane region" description="Helical; Name=S5 of repeat I" evidence="3">
    <location>
        <begin position="251"/>
        <end position="270"/>
    </location>
</feature>
<feature type="topological domain" description="Extracellular" evidence="73">
    <location>
        <begin position="271"/>
        <end position="369"/>
    </location>
</feature>
<feature type="intramembrane region" description="Pore-forming" evidence="3">
    <location>
        <begin position="370"/>
        <end position="394"/>
    </location>
</feature>
<feature type="topological domain" description="Extracellular" evidence="73">
    <location>
        <begin position="395"/>
        <end position="401"/>
    </location>
</feature>
<feature type="transmembrane region" description="Helical; Name=S6 of repeat I" evidence="3">
    <location>
        <begin position="402"/>
        <end position="422"/>
    </location>
</feature>
<feature type="topological domain" description="Cytoplasmic" evidence="73">
    <location>
        <begin position="423"/>
        <end position="759"/>
    </location>
</feature>
<feature type="transmembrane region" description="Helical; Name=S1 of repeat II" evidence="3">
    <location>
        <begin position="760"/>
        <end position="778"/>
    </location>
</feature>
<feature type="topological domain" description="Extracellular" evidence="73">
    <location>
        <begin position="779"/>
        <end position="789"/>
    </location>
</feature>
<feature type="transmembrane region" description="Helical; Name=S2 of repeat II" evidence="3">
    <location>
        <begin position="790"/>
        <end position="809"/>
    </location>
</feature>
<feature type="topological domain" description="Cytoplasmic" evidence="73">
    <location>
        <begin position="810"/>
        <end position="823"/>
    </location>
</feature>
<feature type="transmembrane region" description="Helical; Name=S3 of repeat II" evidence="3">
    <location>
        <begin position="824"/>
        <end position="843"/>
    </location>
</feature>
<feature type="topological domain" description="Extracellular" evidence="73">
    <location>
        <begin position="844"/>
        <end position="845"/>
    </location>
</feature>
<feature type="transmembrane region" description="Helical; Name=S4 of repeat II" evidence="3">
    <location>
        <begin position="846"/>
        <end position="863"/>
    </location>
</feature>
<feature type="topological domain" description="Cytoplasmic" evidence="73">
    <location>
        <begin position="864"/>
        <end position="879"/>
    </location>
</feature>
<feature type="transmembrane region" description="Helical; Name=S5 of repeat II" evidence="3">
    <location>
        <begin position="880"/>
        <end position="898"/>
    </location>
</feature>
<feature type="topological domain" description="Extracellular" evidence="73">
    <location>
        <begin position="899"/>
        <end position="927"/>
    </location>
</feature>
<feature type="intramembrane region" description="Pore-forming" evidence="3">
    <location>
        <begin position="928"/>
        <end position="948"/>
    </location>
</feature>
<feature type="topological domain" description="Extracellular" evidence="73">
    <location>
        <begin position="949"/>
        <end position="961"/>
    </location>
</feature>
<feature type="transmembrane region" description="Helical; Name=S6 of repeat II" evidence="3">
    <location>
        <begin position="962"/>
        <end position="982"/>
    </location>
</feature>
<feature type="topological domain" description="Cytoplasmic" evidence="73">
    <location>
        <begin position="983"/>
        <end position="1209"/>
    </location>
</feature>
<feature type="transmembrane region" description="Helical; Name=S1 of repeat III" evidence="3">
    <location>
        <begin position="1210"/>
        <end position="1227"/>
    </location>
</feature>
<feature type="topological domain" description="Extracellular" evidence="73">
    <location>
        <begin position="1228"/>
        <end position="1240"/>
    </location>
</feature>
<feature type="transmembrane region" description="Helical; Name=S2 of repeat III" evidence="3">
    <location>
        <begin position="1241"/>
        <end position="1259"/>
    </location>
</feature>
<feature type="topological domain" description="Cytoplasmic" evidence="73">
    <location>
        <begin position="1260"/>
        <end position="1273"/>
    </location>
</feature>
<feature type="transmembrane region" description="Helical; Name=S3 of repeat III" evidence="3">
    <location>
        <begin position="1274"/>
        <end position="1292"/>
    </location>
</feature>
<feature type="topological domain" description="Extracellular" evidence="73">
    <location>
        <begin position="1293"/>
        <end position="1300"/>
    </location>
</feature>
<feature type="transmembrane region" description="Helical; Name=S4 of repeat III" evidence="3">
    <location>
        <begin position="1301"/>
        <end position="1319"/>
    </location>
</feature>
<feature type="topological domain" description="Cytoplasmic" evidence="73">
    <location>
        <begin position="1320"/>
        <end position="1336"/>
    </location>
</feature>
<feature type="transmembrane region" description="Helical; Name=S5 of repeat III" evidence="3">
    <location>
        <begin position="1337"/>
        <end position="1356"/>
    </location>
</feature>
<feature type="topological domain" description="Extracellular" evidence="73">
    <location>
        <begin position="1357"/>
        <end position="1408"/>
    </location>
</feature>
<feature type="intramembrane region" description="Pore-forming" evidence="3">
    <location>
        <begin position="1409"/>
        <end position="1430"/>
    </location>
</feature>
<feature type="topological domain" description="Extracellular" evidence="73">
    <location>
        <begin position="1431"/>
        <end position="1447"/>
    </location>
</feature>
<feature type="transmembrane region" description="Helical; Name=S6 of repeat III" evidence="3">
    <location>
        <begin position="1448"/>
        <end position="1469"/>
    </location>
</feature>
<feature type="topological domain" description="Cytoplasmic" evidence="73">
    <location>
        <begin position="1470"/>
        <end position="1532"/>
    </location>
</feature>
<feature type="transmembrane region" description="Helical; Name=S1 of repeat IV" evidence="3">
    <location>
        <begin position="1533"/>
        <end position="1550"/>
    </location>
</feature>
<feature type="topological domain" description="Extracellular" evidence="73">
    <location>
        <begin position="1551"/>
        <end position="1561"/>
    </location>
</feature>
<feature type="transmembrane region" description="Helical; Name=S2 of repeat IV" evidence="3">
    <location>
        <begin position="1562"/>
        <end position="1580"/>
    </location>
</feature>
<feature type="topological domain" description="Cytoplasmic" evidence="73">
    <location>
        <begin position="1581"/>
        <end position="1592"/>
    </location>
</feature>
<feature type="transmembrane region" description="Helical; Name=S3 of repeat IV" evidence="3">
    <location>
        <begin position="1593"/>
        <end position="1610"/>
    </location>
</feature>
<feature type="topological domain" description="Extracellular" evidence="73">
    <location>
        <begin position="1611"/>
        <end position="1623"/>
    </location>
</feature>
<feature type="transmembrane region" description="Helical; Name=S4 of repeat IV" evidence="3">
    <location>
        <begin position="1624"/>
        <end position="1640"/>
    </location>
</feature>
<feature type="topological domain" description="Cytoplasmic" evidence="73">
    <location>
        <begin position="1641"/>
        <end position="1659"/>
    </location>
</feature>
<feature type="transmembrane region" description="Helical; Name=S5 of repeat IV" evidence="3">
    <location>
        <begin position="1660"/>
        <end position="1677"/>
    </location>
</feature>
<feature type="topological domain" description="Extracellular" evidence="73">
    <location>
        <begin position="1678"/>
        <end position="1699"/>
    </location>
</feature>
<feature type="intramembrane region" description="Pore-forming" evidence="3">
    <location>
        <begin position="1700"/>
        <end position="1722"/>
    </location>
</feature>
<feature type="topological domain" description="Extracellular" evidence="73">
    <location>
        <begin position="1723"/>
        <end position="1752"/>
    </location>
</feature>
<feature type="transmembrane region" description="Helical; Name=S6 of repeat IV" evidence="3">
    <location>
        <begin position="1753"/>
        <end position="1775"/>
    </location>
</feature>
<feature type="topological domain" description="Cytoplasmic" evidence="73">
    <location>
        <begin position="1776"/>
        <end position="2005"/>
    </location>
</feature>
<feature type="repeat" description="I" evidence="73">
    <location>
        <begin position="111"/>
        <end position="456"/>
    </location>
</feature>
<feature type="repeat" description="II" evidence="73">
    <location>
        <begin position="741"/>
        <end position="1013"/>
    </location>
</feature>
<feature type="repeat" description="III" evidence="73">
    <location>
        <begin position="1190"/>
        <end position="1504"/>
    </location>
</feature>
<feature type="repeat" description="IV" evidence="73">
    <location>
        <begin position="1513"/>
        <end position="1811"/>
    </location>
</feature>
<feature type="domain" description="IQ" evidence="6">
    <location>
        <begin position="1905"/>
        <end position="1934"/>
    </location>
</feature>
<feature type="region of interest" description="Disordered" evidence="7">
    <location>
        <begin position="28"/>
        <end position="61"/>
    </location>
</feature>
<feature type="region of interest" description="Disordered" evidence="7">
    <location>
        <begin position="494"/>
        <end position="529"/>
    </location>
</feature>
<feature type="region of interest" description="Disordered" evidence="7">
    <location>
        <begin position="590"/>
        <end position="610"/>
    </location>
</feature>
<feature type="region of interest" description="Binds SCN2B" evidence="74">
    <location>
        <begin position="917"/>
        <end position="918"/>
    </location>
</feature>
<feature type="region of interest" description="Disordered" evidence="7">
    <location>
        <begin position="1120"/>
        <end position="1165"/>
    </location>
</feature>
<feature type="region of interest" description="Disordered" evidence="7">
    <location>
        <begin position="1935"/>
        <end position="2005"/>
    </location>
</feature>
<feature type="compositionally biased region" description="Basic and acidic residues" evidence="7">
    <location>
        <begin position="511"/>
        <end position="529"/>
    </location>
</feature>
<feature type="compositionally biased region" description="Basic and acidic residues" evidence="7">
    <location>
        <begin position="596"/>
        <end position="610"/>
    </location>
</feature>
<feature type="compositionally biased region" description="Acidic residues" evidence="7">
    <location>
        <begin position="1155"/>
        <end position="1165"/>
    </location>
</feature>
<feature type="compositionally biased region" description="Basic and acidic residues" evidence="7">
    <location>
        <begin position="1935"/>
        <end position="1964"/>
    </location>
</feature>
<feature type="compositionally biased region" description="Basic and acidic residues" evidence="7">
    <location>
        <begin position="1979"/>
        <end position="2005"/>
    </location>
</feature>
<feature type="site" description="Binds Mu-conotoxin KIIIA" evidence="74">
    <location>
        <position position="330"/>
    </location>
</feature>
<feature type="site" description="Binds Mu-conotoxin KIIIA" evidence="74">
    <location>
        <position position="362"/>
    </location>
</feature>
<feature type="site" description="Binds SCN2B; via carbonyl oxygen" evidence="74">
    <location>
        <position position="909"/>
    </location>
</feature>
<feature type="site" description="Binds Mu-conotoxin KIIIA; via amide nitrogen" evidence="74">
    <location>
        <position position="916"/>
    </location>
</feature>
<feature type="site" description="Binds Mu-conotoxin KIIIA; via carbonyl oxygen" evidence="74">
    <location>
        <position position="920"/>
    </location>
</feature>
<feature type="site" description="Binds Mu-conotoxin KIIIA" evidence="74">
    <location>
        <position position="945"/>
    </location>
</feature>
<feature type="site" description="Binds Mu-conotoxin KIIIA" evidence="74">
    <location>
        <position position="949"/>
    </location>
</feature>
<feature type="site" description="Binds Mu-conotoxin KIIIA; via amide nitrogen" evidence="74">
    <location>
        <position position="1374"/>
    </location>
</feature>
<feature type="site" description="Binds Mu-conotoxin KIIIA" evidence="74">
    <location>
        <position position="1429"/>
    </location>
</feature>
<feature type="site" description="Binds Mu-conotoxin KIIIA" evidence="74">
    <location>
        <position position="1443"/>
    </location>
</feature>
<feature type="site" description="Important for channel closure" evidence="1">
    <location>
        <position position="1489"/>
    </location>
</feature>
<feature type="modified residue" description="Phosphoserine" evidence="4">
    <location>
        <position position="4"/>
    </location>
</feature>
<feature type="modified residue" description="Phosphoserine" evidence="4">
    <location>
        <position position="468"/>
    </location>
</feature>
<feature type="modified residue" description="Phosphoserine" evidence="4">
    <location>
        <position position="471"/>
    </location>
</feature>
<feature type="modified residue" description="Phosphoserine" evidence="4">
    <location>
        <position position="484"/>
    </location>
</feature>
<feature type="modified residue" description="Phosphoserine" evidence="4">
    <location>
        <position position="526"/>
    </location>
</feature>
<feature type="modified residue" description="Phosphoserine" evidence="4">
    <location>
        <position position="528"/>
    </location>
</feature>
<feature type="modified residue" description="Phosphoserine" evidence="4">
    <location>
        <position position="531"/>
    </location>
</feature>
<feature type="modified residue" description="Phosphoserine" evidence="4">
    <location>
        <position position="553"/>
    </location>
</feature>
<feature type="modified residue" description="Phosphoserine" evidence="4">
    <location>
        <position position="554"/>
    </location>
</feature>
<feature type="modified residue" description="Phosphoserine" evidence="4">
    <location>
        <position position="558"/>
    </location>
</feature>
<feature type="modified residue" description="Phosphoserine" evidence="4">
    <location>
        <position position="573"/>
    </location>
</feature>
<feature type="modified residue" description="Phosphoserine" evidence="4">
    <location>
        <position position="576"/>
    </location>
</feature>
<feature type="modified residue" description="Phosphoserine" evidence="4">
    <location>
        <position position="589"/>
    </location>
</feature>
<feature type="modified residue" description="Phosphoserine" evidence="4">
    <location>
        <position position="610"/>
    </location>
</feature>
<feature type="modified residue" description="Phosphoserine" evidence="4">
    <location>
        <position position="623"/>
    </location>
</feature>
<feature type="modified residue" description="Phosphoserine" evidence="4">
    <location>
        <position position="686"/>
    </location>
</feature>
<feature type="modified residue" description="Phosphoserine" evidence="4">
    <location>
        <position position="687"/>
    </location>
</feature>
<feature type="modified residue" description="Phosphoserine" evidence="4">
    <location>
        <position position="721"/>
    </location>
</feature>
<feature type="modified residue" description="Phosphoserine; by PKC" evidence="4">
    <location>
        <position position="1506"/>
    </location>
</feature>
<feature type="modified residue" description="Phosphoserine" evidence="4">
    <location>
        <position position="1930"/>
    </location>
</feature>
<feature type="modified residue" description="Phosphothreonine" evidence="4">
    <location>
        <position position="1943"/>
    </location>
</feature>
<feature type="modified residue" description="Phosphothreonine" evidence="4">
    <location>
        <position position="1963"/>
    </location>
</feature>
<feature type="modified residue" description="Phosphothreonine" evidence="4">
    <location>
        <position position="1966"/>
    </location>
</feature>
<feature type="modified residue" description="Phosphoserine" evidence="4">
    <location>
        <position position="1971"/>
    </location>
</feature>
<feature type="glycosylation site" description="N-linked (GlcNAc...) asparagine" evidence="5">
    <location>
        <position position="212"/>
    </location>
</feature>
<feature type="glycosylation site" description="N-linked (GlcNAc...) asparagine" evidence="5">
    <location>
        <position position="285"/>
    </location>
</feature>
<feature type="glycosylation site" description="N-linked (GlcNAc...) asparagine" evidence="5">
    <location>
        <position position="291"/>
    </location>
</feature>
<feature type="glycosylation site" description="N-linked (GlcNAc...) asparagine" evidence="5">
    <location>
        <position position="297"/>
    </location>
</feature>
<feature type="glycosylation site" description="N-linked (GlcNAc...) asparagine" evidence="5">
    <location>
        <position position="303"/>
    </location>
</feature>
<feature type="glycosylation site" description="N-linked (GlcNAc...) asparagine" evidence="5">
    <location>
        <position position="308"/>
    </location>
</feature>
<feature type="glycosylation site" description="N-linked (GlcNAc...) asparagine" evidence="71 77">
    <location>
        <position position="340"/>
    </location>
</feature>
<feature type="glycosylation site" description="N-linked (GlcNAc...) asparagine" evidence="71 77">
    <location>
        <position position="1368"/>
    </location>
</feature>
<feature type="glycosylation site" description="N-linked (GlcNAc...) asparagine" evidence="71 77">
    <location>
        <position position="1382"/>
    </location>
</feature>
<feature type="glycosylation site" description="N-linked (GlcNAc...) asparagine" evidence="71 77">
    <location>
        <position position="1393"/>
    </location>
</feature>
<feature type="disulfide bond" evidence="71 77">
    <location>
        <begin position="278"/>
        <end position="338"/>
    </location>
</feature>
<feature type="disulfide bond" description="Interchain; with SCN2B or SCN4B" evidence="55 71 77">
    <location>
        <position position="910"/>
    </location>
</feature>
<feature type="disulfide bond" description="Interchain; with the conotoxin GVIIJ (when the channel is not linked to SCN2B or SCN4B; the bond to SCN2B or SCN4B protects the channel from the inhibition by toxin)" evidence="4">
    <location>
        <position position="910"/>
    </location>
</feature>
<feature type="disulfide bond" evidence="71 77">
    <location>
        <begin position="912"/>
        <end position="918"/>
    </location>
</feature>
<feature type="disulfide bond" evidence="71 77">
    <location>
        <begin position="950"/>
        <end position="959"/>
    </location>
</feature>
<feature type="disulfide bond" evidence="71 77">
    <location>
        <begin position="1366"/>
        <end position="1386"/>
    </location>
</feature>
<feature type="disulfide bond" evidence="71 77">
    <location>
        <begin position="1731"/>
        <end position="1746"/>
    </location>
</feature>
<feature type="cross-link" description="Glycyl lysine isopeptide (Lys-Gly) (interchain with G-Cter in SUMO1)" evidence="4">
    <location>
        <position position="38"/>
    </location>
</feature>
<feature type="splice variant" id="VSP_001032" description="In isoform 2." evidence="73">
    <original>D</original>
    <variation>N</variation>
    <location>
        <position position="209"/>
    </location>
</feature>
<feature type="sequence variant" id="VAR_078448" description="Found in a patient with autism spectrum disorder; likely pathogenic; decreased voltage-gated sodium channel activity; faster channel inactivation; loss of function." evidence="61">
    <original>D</original>
    <variation>N</variation>
    <location>
        <position position="12"/>
    </location>
</feature>
<feature type="sequence variant" id="VAR_029732" description="In dbSNP:rs17183814." evidence="8 11 21 28 52">
    <original>R</original>
    <variation>K</variation>
    <location>
        <position position="19"/>
    </location>
</feature>
<feature type="sequence variant" id="VAR_078449" description="Found in a patient with autism spectrum disorder; likely pathogenic; decreased voltage-gated sodium channel activity; decreased expression; loss of function." evidence="61">
    <original>D</original>
    <variation>G</variation>
    <location>
        <position position="82"/>
    </location>
</feature>
<feature type="sequence variant" id="VAR_078450" description="Found in a patient with intractable epilepsy and severe mental decline; likely pathogenic; non-conducting; loss of voltage-gated sodium channel activity; dominant-negative." evidence="13">
    <location>
        <begin position="102"/>
        <end position="2005"/>
    </location>
</feature>
<feature type="sequence variant" id="VAR_078451" description="In DEE11." evidence="41">
    <original>N</original>
    <variation>K</variation>
    <location>
        <position position="132"/>
    </location>
</feature>
<feature type="sequence variant" id="VAR_078452" description="In DEE11; responds to ketogenic diet." evidence="32 50 70">
    <original>M</original>
    <variation>I</variation>
    <location>
        <position position="136"/>
    </location>
</feature>
<feature type="sequence variant" id="VAR_078453" description="Found in a patient with schizofrenia; uncertain significance." evidence="52">
    <location>
        <begin position="169"/>
        <end position="2005"/>
    </location>
</feature>
<feature type="sequence variant" id="VAR_069996" description="In DEE11." evidence="35 59">
    <original>E</original>
    <variation>G</variation>
    <location>
        <position position="169"/>
    </location>
</feature>
<feature type="sequence variant" id="VAR_075572" description="Found in a patient with non-specific acute encephalopathy; uncertain significance; dbSNP:rs1376337813." evidence="51">
    <original>I</original>
    <variation>V</variation>
    <location>
        <position position="172"/>
    </location>
</feature>
<feature type="sequence variant" id="VAR_029733" description="In BFIS3; mutant channel inactivates more slowly than wild-type whereas the sodium channel conductance is not affected; dbSNP:rs121917748." evidence="8">
    <original>R</original>
    <variation>W</variation>
    <location>
        <position position="188"/>
    </location>
</feature>
<feature type="sequence variant" id="VAR_081430" description="In DEE11; responds to ketogenic diet." evidence="64">
    <original>W</original>
    <variation>C</variation>
    <location>
        <position position="191"/>
    </location>
</feature>
<feature type="sequence variant" id="VAR_078195" description="Found in a patient with drug-resistant focal epilepsy; likely pathogenic; dbSNP:rs1057519525." evidence="59">
    <original>W</original>
    <variation>G</variation>
    <location>
        <position position="191"/>
    </location>
</feature>
<feature type="sequence variant" id="VAR_072745" description="In BFIS3; gain of function mutation; hyperpolarizing shift of the activation curve." evidence="25 68">
    <original>V</original>
    <variation>E</variation>
    <location>
        <position position="208"/>
    </location>
</feature>
<feature type="sequence variant" id="VAR_078730" description="In DEE11; the disease progresses to West syndrome." evidence="31">
    <original>G</original>
    <variation>D</variation>
    <location>
        <position position="211"/>
    </location>
</feature>
<feature type="sequence variant" id="VAR_069997" description="In DEE11; the disease progresses to West syndrome." evidence="35">
    <original>N</original>
    <variation>D</variation>
    <location>
        <position position="212"/>
    </location>
</feature>
<feature type="sequence variant" id="VAR_069998" description="In DEE11." evidence="35">
    <original>V</original>
    <variation>D</variation>
    <location>
        <position position="213"/>
    </location>
</feature>
<feature type="sequence variant" id="VAR_078454" description="In DEE11; uncertain significance." evidence="50">
    <original>T</original>
    <variation>K</variation>
    <location>
        <position position="218"/>
    </location>
</feature>
<feature type="sequence variant" id="VAR_078731" description="In DEE11." evidence="46">
    <original>R</original>
    <variation>G</variation>
    <location>
        <position position="220"/>
    </location>
</feature>
<feature type="sequence variant" id="VAR_029734" description="In BFIS3; increased voltage-gated sodium channel activity; modified voltage dependence of activation and inactivation; gain of function; dbSNP:rs121917752." evidence="14 17 29">
    <original>R</original>
    <variation>Q</variation>
    <location>
        <position position="223"/>
    </location>
</feature>
<feature type="sequence variant" id="VAR_069999" description="In DEE11; dbSNP:rs1235044536." evidence="35">
    <original>T</original>
    <variation>S</variation>
    <location>
        <position position="236"/>
    </location>
</feature>
<feature type="sequence variant" id="VAR_078455" description="In BFIS3." evidence="50">
    <original>A</original>
    <variation>S</variation>
    <location>
        <position position="240"/>
    </location>
</feature>
<feature type="sequence variant" id="VAR_078196" description="In DEE11; dbSNP:rs1057519528." evidence="59">
    <original>V</original>
    <variation>I</variation>
    <location>
        <position position="251"/>
    </location>
</feature>
<feature type="sequence variant" id="VAR_065176" description="In BFIS3; increased voltage-gated sodium channel activity; increased persistent sodium current; gain of function; dbSNP:rs387906687." evidence="22">
    <original>M</original>
    <variation>V</variation>
    <location>
        <position position="252"/>
    </location>
</feature>
<feature type="sequence variant" id="VAR_065177" description="In BFIS3; increased voltage-gated sodium channel activity; faster recovery from inactivation; gain of function; dbSNP:rs1057520413." evidence="22">
    <original>V</original>
    <variation>M</variation>
    <location>
        <position position="261"/>
    </location>
</feature>
<feature type="sequence variant" id="VAR_070000" description="In DEE11." evidence="35">
    <original>A</original>
    <variation>T</variation>
    <location>
        <position position="263"/>
    </location>
</feature>
<feature type="sequence variant" id="VAR_065178" description="In DEE11 and EA9; increased voltage-gated sodium channel activity; increased persistent sodium current; gain of function; dbSNP:rs387906686." evidence="23 30 54 57 59 60">
    <original>A</original>
    <variation>V</variation>
    <location>
        <position position="263"/>
    </location>
</feature>
<feature type="sequence variant" id="VAR_073428" description="Found in a patient with Dravet syndrome; uncertain significance." evidence="20 28">
    <original>D</original>
    <variation>N</variation>
    <location>
        <position position="322"/>
    </location>
</feature>
<feature type="sequence variant" id="VAR_064331" description="Found in a patient with acute encephalopathy with biphasic seizures, late reduced diffusion and in a patient with Dravet syndrome; uncertain significance; dbSNP:rs781204054." evidence="15 20 21 28 51">
    <original>F</original>
    <variation>V</variation>
    <location>
        <position position="328"/>
    </location>
</feature>
<feature type="sequence variant" id="VAR_078456" description="Found in a patient with autism spectrum disorder; likely pathogenic; loss of voltage-gated sodium channel activity; non-conducting; no dominant-negative effect." evidence="61">
    <original>R</original>
    <variation>H</variation>
    <location>
        <position position="379"/>
    </location>
</feature>
<feature type="sequence variant" id="VAR_029735" description="In dbSNP:rs2228988.">
    <original>F</original>
    <variation>Y</variation>
    <location>
        <position position="385"/>
    </location>
</feature>
<feature type="sequence variant" id="VAR_081431" description="Found in a patient with early-onset seizures and Rett-like features, including autistic behavior, limited hand function with chorea and profound intellectual disability; likely pathogenic." evidence="63">
    <original>V</original>
    <variation>M</variation>
    <location>
        <position position="424"/>
    </location>
</feature>
<feature type="sequence variant" id="VAR_078457" description="In DEE11; dbSNP:rs796053183." evidence="41">
    <original>E</original>
    <variation>G</variation>
    <location>
        <position position="430"/>
    </location>
</feature>
<feature type="sequence variant" id="VAR_078458" description="In BFIS3; uncertain significance." evidence="18">
    <original>E</original>
    <variation>Q</variation>
    <location>
        <position position="430"/>
    </location>
</feature>
<feature type="sequence variant" id="VAR_081432" description="Found in patients with GEFS+; likely pathogenic; dbSNP:rs745774658." evidence="65">
    <original>A</original>
    <variation>T</variation>
    <location>
        <position position="467"/>
    </location>
</feature>
<feature type="sequence variant" id="VAR_029736" description="In dbSNP:rs186154973." evidence="8 21">
    <original>R</original>
    <variation>Q</variation>
    <location>
        <position position="524"/>
    </location>
</feature>
<feature type="sequence variant" id="VAR_065179" description="There is no significant effects on the voltage-dependence of the channel; dbSNP:rs986167267." evidence="21">
    <original>A</original>
    <variation>V</variation>
    <location>
        <position position="575"/>
    </location>
</feature>
<feature type="sequence variant" id="VAR_078732" description="Found in a patient with autism spectrum disorder; likely pathogenic." evidence="47">
    <location>
        <begin position="583"/>
        <end position="2005"/>
    </location>
</feature>
<feature type="sequence variant" id="VAR_078733" description="Found in a patient with Dravet syndrome; uncertain significance." evidence="28">
    <original>D</original>
    <variation>N</variation>
    <location>
        <position position="649"/>
    </location>
</feature>
<feature type="sequence variant" id="VAR_078734" description="Found in a patient with autism spectrum disorder; likely pathogenic." evidence="53">
    <original>T</original>
    <variation>K</variation>
    <location>
        <position position="674"/>
    </location>
</feature>
<feature type="sequence variant" id="VAR_081433" description="In DEE11; hyperpolarizing shift of the activation curve and increased persitent current; gain of function." evidence="68">
    <original>T</original>
    <variation>I</variation>
    <location>
        <position position="773"/>
    </location>
</feature>
<feature type="sequence variant" id="VAR_078459" description="Found in a patient with schizofrenia; uncertain significance." evidence="52">
    <original>R</original>
    <variation>P</variation>
    <location>
        <position position="850"/>
    </location>
</feature>
<feature type="sequence variant" id="VAR_070001" description="In DEE11; phenotype consistent with West syndrome; decreased neuronal excitability; decreased peak sodium current densities; loss of function; dbSNP:rs794727152." evidence="35 45 66">
    <original>R</original>
    <variation>Q</variation>
    <location>
        <position position="853"/>
    </location>
</feature>
<feature type="sequence variant" id="VAR_078460" description="In DEE11." evidence="50">
    <original>R</original>
    <variation>L</variation>
    <location>
        <position position="856"/>
    </location>
</feature>
<feature type="sequence variant" id="VAR_078735" description="In DEE11." evidence="56">
    <original>I</original>
    <variation>M</variation>
    <location>
        <position position="873"/>
    </location>
</feature>
<feature type="sequence variant" id="VAR_070002" description="In DEE11; the disease progresses to West syndrome." evidence="35">
    <original>N</original>
    <variation>T</variation>
    <location>
        <position position="876"/>
    </location>
</feature>
<feature type="sequence variant" id="VAR_029737" description="In BFIS3; dbSNP:rs121917751." evidence="14">
    <original>V</original>
    <variation>I</variation>
    <location>
        <position position="892"/>
    </location>
</feature>
<feature type="sequence variant" id="VAR_078197" description="In DEE11; dbSNP:rs1057519526." evidence="59">
    <original>A</original>
    <variation>V</variation>
    <location>
        <position position="896"/>
    </location>
</feature>
<feature type="sequence variant" id="VAR_078461" description="In DEE11; dbSNP:rs796053119." evidence="32 50">
    <original>K</original>
    <variation>N</variation>
    <location>
        <position position="905"/>
    </location>
</feature>
<feature type="sequence variant" id="VAR_081434" description="In BFIS3; increased voltage-gated sodium channel activity; gain of function; dbSNP:rs796053122." evidence="68">
    <original>K</original>
    <variation>E</variation>
    <location>
        <position position="908"/>
    </location>
</feature>
<feature type="sequence variant" id="VAR_078462" description="In dbSNP:rs2228980." evidence="52">
    <original>K</original>
    <variation>R</variation>
    <location>
        <position position="908"/>
    </location>
</feature>
<feature type="sequence variant" id="VAR_078463" description="In DEE11; mild form with ataxia." evidence="32 50">
    <original>F</original>
    <variation>C</variation>
    <location>
        <position position="928"/>
    </location>
</feature>
<feature type="sequence variant" id="VAR_078464" description="Found in a patient with autism spectrum disorder; likely pathogenic; loss of voltage-gated sodium channel activity; non-conducting; dbSNP:rs796053197." evidence="61">
    <original>R</original>
    <variation>C</variation>
    <location>
        <position position="937"/>
    </location>
</feature>
<feature type="sequence variant" id="VAR_078465" description="Found in a patient with autism spectrum disorder; likely pathogenic; loss of voltage-gated sodium channel activity; non-conducting; dbSNP:rs1553579488." evidence="61">
    <original>R</original>
    <variation>H</variation>
    <location>
        <position position="937"/>
    </location>
</feature>
<feature type="sequence variant" id="VAR_078466" description="Found in a patient with autism spectrum disorder; likely pathogenic; loss of voltage-gated sodium channel activity; non-conducting." evidence="61">
    <location>
        <begin position="959"/>
        <end position="2005"/>
    </location>
</feature>
<feature type="sequence variant" id="VAR_078467" description="Found in a patient with autism; uncertain significance." evidence="50">
    <original>N</original>
    <variation>K</variation>
    <location>
        <position position="976"/>
    </location>
</feature>
<feature type="sequence variant" id="VAR_078736" description="In DEE11; dbSNP:rs796053124." evidence="56">
    <original>S</original>
    <variation>I</variation>
    <location>
        <position position="987"/>
    </location>
</feature>
<feature type="sequence variant" id="VAR_070003" description="In DEE11; the disease progresses to West syndrome; dbSNP:rs796053126." evidence="35 56">
    <original>E</original>
    <variation>K</variation>
    <location>
        <position position="999"/>
    </location>
</feature>
<feature type="sequence variant" id="VAR_078737" description="In DEE11." evidence="56">
    <original>E</original>
    <variation>V</variation>
    <location>
        <position position="999"/>
    </location>
</feature>
<feature type="sequence variant" id="VAR_078468" description="In BFIS3." evidence="16 29">
    <original>N</original>
    <variation>K</variation>
    <location>
        <position position="1001"/>
    </location>
</feature>
<feature type="sequence variant" id="VAR_029738" description="In BFIS3; dbSNP:rs121917754." evidence="14">
    <original>L</original>
    <variation>I</variation>
    <location>
        <position position="1003"/>
    </location>
</feature>
<feature type="sequence variant" id="VAR_078469" description="Found in a patient with autism spectrum disorder; likely pathogenic; loss of voltage-gated sodium channel activity; non-conducting." evidence="61">
    <location>
        <begin position="1013"/>
        <end position="2005"/>
    </location>
</feature>
<feature type="sequence variant" id="VAR_078470" description="Found in a patient with acute encephalitis with refractory and repetitive partial seizures; uncertain significance; dbSNP:rs373780066." evidence="24">
    <original>M</original>
    <variation>T</variation>
    <location>
        <position position="1128"/>
    </location>
</feature>
<feature type="sequence variant" id="VAR_065180" description="In DEE11; markedly altered channel voltage-dependence; responds to modified Atkins diet; dbSNP:rs387906684." evidence="21 44">
    <original>E</original>
    <variation>K</variation>
    <location>
        <position position="1211"/>
    </location>
</feature>
<feature type="sequence variant" id="VAR_078738" description="In DEE11." evidence="56">
    <original>K</original>
    <variation>E</variation>
    <location>
        <position position="1260"/>
    </location>
</feature>
<feature type="sequence variant" id="VAR_078739" description="In DEE11." evidence="56">
    <original>K</original>
    <variation>Q</variation>
    <location>
        <position position="1260"/>
    </location>
</feature>
<feature type="sequence variant" id="VAR_078471" description="Found in a patient with schizofrenia; uncertain significance; dbSNP:rs1184922927." evidence="52">
    <original>V</original>
    <variation>F</variation>
    <location>
        <position position="1282"/>
    </location>
</feature>
<feature type="sequence variant" id="VAR_073429" description="In DEE11; modified voltage-gated sodium channel activity; activated with lowered voltage sensitivity; disturbed fast and slow inactivation." evidence="20 26 28">
    <original>R</original>
    <variation>T</variation>
    <location>
        <position position="1312"/>
    </location>
</feature>
<feature type="sequence variant" id="VAR_078198" description="In DEE11; dbSNP:rs796053130." evidence="59">
    <original>A</original>
    <variation>V</variation>
    <location>
        <position position="1316"/>
    </location>
</feature>
<feature type="sequence variant" id="VAR_029739" description="In BFIS3; modified voltage-gated sodium channel activity; modified voltage dependence of activation and inactivation; dbSNP:rs121917753." evidence="14 17 19 29">
    <original>R</original>
    <variation>Q</variation>
    <location>
        <position position="1319"/>
    </location>
</feature>
<feature type="sequence variant" id="VAR_078740" description="In BFIS3; uncertain significance." evidence="48">
    <original>E</original>
    <variation>K</variation>
    <location>
        <position position="1321"/>
    </location>
</feature>
<feature type="sequence variant" id="VAR_070004" description="In DEE11; the disease progresses to West syndrome; dbSNP:rs1057519523." evidence="35">
    <original>M</original>
    <variation>V</variation>
    <location>
        <position position="1323"/>
    </location>
</feature>
<feature type="sequence variant" id="VAR_078472" description="In DEE11; dbSNP:rs796053131." evidence="36">
    <original>V</original>
    <variation>D</variation>
    <location>
        <position position="1326"/>
    </location>
</feature>
<feature type="sequence variant" id="VAR_070005" description="In DEE11; the disease progresses to West syndrome." evidence="35">
    <original>V</original>
    <variation>L</variation>
    <location>
        <position position="1326"/>
    </location>
</feature>
<feature type="sequence variant" id="VAR_029740" description="In BFIS3; increased voltage-gated sodium channel activity; decreased overall channel availability during repetitive stimulation; gain of function; no effect on kinetics of activation or inactivation; no effect on voltage dependence of activation; dbSNP:rs121917749." evidence="10 17 19">
    <original>L</original>
    <variation>F</variation>
    <location>
        <position position="1330"/>
    </location>
</feature>
<feature type="sequence variant" id="VAR_070006" description="In DEE11; the disease progresses to West syndrome." evidence="35">
    <original>S</original>
    <variation>Y</variation>
    <location>
        <position position="1336"/>
    </location>
</feature>
<feature type="sequence variant" id="VAR_070007" description="In DEE11." evidence="35">
    <original>M</original>
    <variation>T</variation>
    <location>
        <position position="1338"/>
    </location>
</feature>
<feature type="sequence variant" id="VAR_078473" description="In DEE11; dbSNP:rs796053134." evidence="41 42 49">
    <original>L</original>
    <variation>P</variation>
    <location>
        <position position="1342"/>
    </location>
</feature>
<feature type="sequence variant" id="VAR_078199" description="In DEE11; dbSNP:rs1057519527." evidence="59">
    <original>C</original>
    <variation>Y</variation>
    <location>
        <position position="1344"/>
    </location>
</feature>
<feature type="sequence variant" id="VAR_078741" description="Found in a patient with autism spectrum disorder; uncertain significance." evidence="47">
    <original>G</original>
    <variation>R</variation>
    <location>
        <position position="1372"/>
    </location>
</feature>
<feature type="sequence variant" id="VAR_078474" description="Found in a patient with autism spectrum disorder; likely pathogenic; loss of voltage-gated sodium channel activity; non-conducting." evidence="61">
    <original>C</original>
    <variation>R</variation>
    <location>
        <position position="1386"/>
    </location>
</feature>
<feature type="sequence variant" id="VAR_078742" description="In DEE11." evidence="27">
    <location>
        <begin position="1398"/>
        <end position="2005"/>
    </location>
</feature>
<feature type="sequence variant" id="VAR_078475" description="Found in a patient with autism spectrum disorder; likely pathogenic; decreased voltage-gated sodium channel activity; faster channel inactivation; fewer channels contribution to macroscopic currents and fewer channels expressed on membrane; dbSNP:rs1382026643." evidence="61">
    <original>T</original>
    <variation>M</variation>
    <location>
        <position position="1420"/>
    </location>
</feature>
<feature type="sequence variant" id="VAR_070008" description="Found in a boy with infantile spasms and bitemporal glucose hypometabolism; likely pathogenic; dbSNP:rs796053137." evidence="34">
    <original>K</original>
    <variation>E</variation>
    <location>
        <position position="1422"/>
    </location>
</feature>
<feature type="sequence variant" id="VAR_078743" description="In DEE11." evidence="56">
    <location>
        <begin position="1435"/>
        <end position="2005"/>
    </location>
</feature>
<feature type="sequence variant" id="VAR_081435" description="Found in a patient with non-syndromic intellectual disability and epilepsy; likely pathogenic." evidence="67">
    <original>G</original>
    <variation>R</variation>
    <location>
        <position position="1460"/>
    </location>
</feature>
<feature type="sequence variant" id="VAR_065181" description="In DEE11; increased voltage-gated sodium channel activity; markedly altered the voltage-dependence of the channel; gain of function; dbSNP:rs387906685." evidence="21">
    <original>I</original>
    <variation>M</variation>
    <location>
        <position position="1473"/>
    </location>
</feature>
<feature type="sequence variant" id="VAR_078744" description="In DEE11." evidence="56">
    <original>Q</original>
    <variation>P</variation>
    <location>
        <position position="1479"/>
    </location>
</feature>
<feature type="sequence variant" id="VAR_078745" description="Found in a patient with autism spectrum disorder; likely pathogenic." evidence="53">
    <location>
        <begin position="1515"/>
        <end position="2005"/>
    </location>
</feature>
<feature type="sequence variant" id="VAR_078476" description="In DEE11 and EA9; uncertain significance; no effect on voltage-gated sodium channel activity; higher current density when associated with G-1882; dbSNP:rs147522594." evidence="46 54">
    <original>G</original>
    <variation>A</variation>
    <location>
        <position position="1522"/>
    </location>
</feature>
<feature type="sequence variant" id="VAR_078746" description="In BFIS3; uncertain significance." evidence="48">
    <original>Q</original>
    <variation>K</variation>
    <location>
        <position position="1531"/>
    </location>
</feature>
<feature type="sequence variant" id="VAR_078200" description="In DEE11; dbSNP:rs1057519524." evidence="59">
    <original>M</original>
    <variation>T</variation>
    <location>
        <position position="1548"/>
    </location>
</feature>
<feature type="sequence variant" id="VAR_078477" description="Found in a patient with schizofrenia; uncertain significance; dbSNP:rs1163751310." evidence="52">
    <original>M</original>
    <variation>V</variation>
    <location>
        <position position="1559"/>
    </location>
</feature>
<feature type="sequence variant" id="VAR_029741" description="In BFIS3; increased voltage-gated sodium channel activity; impaired fast inactivation; no effect on kinetics of activation or inactivation; no effect on voltage dependence of activation; gain of function; dbSNP:rs121917750." evidence="10 17 19 66">
    <original>L</original>
    <variation>V</variation>
    <location>
        <position position="1563"/>
    </location>
</feature>
<feature type="sequence variant" id="VAR_078478" description="In BFIS3; increased voltage-gated sodium channel activity; depolarized shift of steady-state inactivation; increased persistent sodium current; slower fast inactivation; accelerated recovery of fast inactivation; gain of function; dbSNP:rs1553463119." evidence="33">
    <original>Y</original>
    <variation>C</variation>
    <location>
        <position position="1589"/>
    </location>
</feature>
<feature type="sequence variant" id="VAR_078479" description="In DEE11; dbSNP:rs886041259." evidence="50">
    <original>G</original>
    <variation>R</variation>
    <location>
        <position position="1593"/>
    </location>
</feature>
<feature type="sequence variant" id="VAR_078480" description="In BFIS3; uncertain significance." evidence="18">
    <original>I</original>
    <variation>S</variation>
    <location>
        <position position="1596"/>
    </location>
</feature>
<feature type="sequence variant" id="VAR_070009" description="In DEE11; the disease progresses to West syndrome." evidence="35">
    <original>T</original>
    <variation>N</variation>
    <location>
        <position position="1623"/>
    </location>
</feature>
<feature type="sequence variant" id="VAR_070010" description="In DEE11." evidence="35">
    <original>R</original>
    <variation>L</variation>
    <location>
        <position position="1629"/>
    </location>
</feature>
<feature type="sequence variant" id="VAR_081436" description="In EA9; uncertain significance; dbSNP:rs796053159." evidence="58">
    <original>G</original>
    <variation>D</variation>
    <location>
        <position position="1634"/>
    </location>
</feature>
<feature type="sequence variant" id="VAR_078482" description="In DEE11." evidence="50">
    <original>G</original>
    <variation>V</variation>
    <location>
        <position position="1634"/>
    </location>
</feature>
<feature type="sequence variant" id="VAR_078747" description="In BFIS3; uncertain significance; dbSNP:rs767224097." evidence="29">
    <original>K</original>
    <variation>N</variation>
    <location>
        <position position="1641"/>
    </location>
</feature>
<feature type="sequence variant" id="VAR_078748" description="In DEE11; also found in patients with familial episodic ataxia and impairment of speech development." evidence="56 69">
    <original>L</original>
    <variation>P</variation>
    <location>
        <position position="1650"/>
    </location>
</feature>
<feature type="sequence variant" id="VAR_078483" description="In DEE11." evidence="43">
    <original>L</original>
    <variation>W</variation>
    <location>
        <position position="1660"/>
    </location>
</feature>
<feature type="sequence variant" id="VAR_078749" description="Found in a patient with autism spectrum disorder; likely pathogenic." evidence="53">
    <original>G</original>
    <variation>R</variation>
    <location>
        <position position="1744"/>
    </location>
</feature>
<feature type="sequence variant" id="VAR_078484" description="Found in a patient with schizofrenia; uncertain significance; dbSNP:rs138497939." evidence="52">
    <original>D</original>
    <variation>A</variation>
    <location>
        <position position="1823"/>
    </location>
</feature>
<feature type="sequence variant" id="VAR_078750" description="In DEE11; dbSNP:rs1553463676." evidence="56">
    <original>L</original>
    <variation>F</variation>
    <location>
        <position position="1829"/>
    </location>
</feature>
<feature type="sequence variant" id="VAR_078751" description="In DEE11." evidence="38">
    <original>H</original>
    <variation>R</variation>
    <location>
        <position position="1853"/>
    </location>
</feature>
<feature type="sequence variant" id="VAR_078485" description="In EA9; gain of function mutation resulting in increased voltage-gated sodium channel activity; hyperpolarized activation; higher current density when associated with A-1522 compared to wild-type or G-1882 alone; dbSNP:rs796053166." evidence="54">
    <original>R</original>
    <variation>G</variation>
    <location>
        <position position="1882"/>
    </location>
</feature>
<feature type="sequence variant" id="VAR_078486" description="In DEE11; dbSNP:rs794727444." evidence="40">
    <original>R</original>
    <variation>L</variation>
    <location>
        <position position="1882"/>
    </location>
</feature>
<feature type="sequence variant" id="VAR_078201" description="In DEE11; increased neuronal excitability; increased peak sodium current densities; gain of function; dbSNP:rs794727444." evidence="32 50 56 59 66">
    <original>R</original>
    <variation>Q</variation>
    <location>
        <position position="1882"/>
    </location>
</feature>
<feature type="sequence variant" id="VAR_029742" description="Found in autism; uncertain significance." evidence="11">
    <original>R</original>
    <variation>T</variation>
    <location>
        <position position="1902"/>
    </location>
</feature>
<feature type="sequence variant" id="VAR_078487" description="In dbSNP:rs201718767." evidence="9">
    <original>R</original>
    <variation>H</variation>
    <location>
        <position position="1918"/>
    </location>
</feature>
<feature type="sequence conflict" description="In Ref. 1; AAA18895." evidence="73" ref="1">
    <original>R</original>
    <variation>L</variation>
    <location>
        <position position="524"/>
    </location>
</feature>
<feature type="sequence conflict" description="In Ref. 1; AAA18895." evidence="73" ref="1">
    <original>V</original>
    <variation>A</variation>
    <location>
        <position position="1325"/>
    </location>
</feature>
<feature type="sequence conflict" description="In Ref. 1; AAA18895." evidence="73" ref="1">
    <original>V</original>
    <variation>L</variation>
    <location>
        <position position="1768"/>
    </location>
</feature>
<feature type="sequence conflict" description="In Ref. 5; CAA46438." evidence="73" ref="5">
    <original>K</original>
    <variation>R</variation>
    <location>
        <position position="1990"/>
    </location>
</feature>
<feature type="helix" evidence="80">
    <location>
        <begin position="118"/>
        <end position="121"/>
    </location>
</feature>
<feature type="helix" evidence="80">
    <location>
        <begin position="124"/>
        <end position="127"/>
    </location>
</feature>
<feature type="helix" evidence="80">
    <location>
        <begin position="129"/>
        <end position="145"/>
    </location>
</feature>
<feature type="helix" evidence="80">
    <location>
        <begin position="156"/>
        <end position="174"/>
    </location>
</feature>
<feature type="helix" evidence="80">
    <location>
        <begin position="190"/>
        <end position="202"/>
    </location>
</feature>
<feature type="helix" evidence="80">
    <location>
        <begin position="204"/>
        <end position="206"/>
    </location>
</feature>
<feature type="strand" evidence="80">
    <location>
        <begin position="207"/>
        <end position="210"/>
    </location>
</feature>
<feature type="helix" evidence="80">
    <location>
        <begin position="218"/>
        <end position="226"/>
    </location>
</feature>
<feature type="helix" evidence="80">
    <location>
        <begin position="227"/>
        <end position="230"/>
    </location>
</feature>
<feature type="helix" evidence="80">
    <location>
        <begin position="234"/>
        <end position="245"/>
    </location>
</feature>
<feature type="helix" evidence="80">
    <location>
        <begin position="246"/>
        <end position="249"/>
    </location>
</feature>
<feature type="helix" evidence="80">
    <location>
        <begin position="251"/>
        <end position="269"/>
    </location>
</feature>
<feature type="helix" evidence="80">
    <location>
        <begin position="273"/>
        <end position="275"/>
    </location>
</feature>
<feature type="strand" evidence="80">
    <location>
        <begin position="276"/>
        <end position="280"/>
    </location>
</feature>
<feature type="turn" evidence="80">
    <location>
        <begin position="317"/>
        <end position="319"/>
    </location>
</feature>
<feature type="strand" evidence="80">
    <location>
        <begin position="323"/>
        <end position="326"/>
    </location>
</feature>
<feature type="strand" evidence="80">
    <location>
        <begin position="329"/>
        <end position="331"/>
    </location>
</feature>
<feature type="strand" evidence="80">
    <location>
        <begin position="351"/>
        <end position="355"/>
    </location>
</feature>
<feature type="turn" evidence="80">
    <location>
        <begin position="361"/>
        <end position="364"/>
    </location>
</feature>
<feature type="strand" evidence="80">
    <location>
        <begin position="367"/>
        <end position="369"/>
    </location>
</feature>
<feature type="helix" evidence="80">
    <location>
        <begin position="370"/>
        <end position="381"/>
    </location>
</feature>
<feature type="helix" evidence="80">
    <location>
        <begin position="386"/>
        <end position="396"/>
    </location>
</feature>
<feature type="helix" evidence="80">
    <location>
        <begin position="399"/>
        <end position="401"/>
    </location>
</feature>
<feature type="helix" evidence="80">
    <location>
        <begin position="402"/>
        <end position="411"/>
    </location>
</feature>
<feature type="turn" evidence="80">
    <location>
        <begin position="412"/>
        <end position="414"/>
    </location>
</feature>
<feature type="helix" evidence="80">
    <location>
        <begin position="415"/>
        <end position="440"/>
    </location>
</feature>
<feature type="helix" evidence="80">
    <location>
        <begin position="742"/>
        <end position="753"/>
    </location>
</feature>
<feature type="strand" evidence="80">
    <location>
        <begin position="754"/>
        <end position="759"/>
    </location>
</feature>
<feature type="turn" evidence="80">
    <location>
        <begin position="760"/>
        <end position="762"/>
    </location>
</feature>
<feature type="helix" evidence="80">
    <location>
        <begin position="763"/>
        <end position="777"/>
    </location>
</feature>
<feature type="turn" evidence="80">
    <location>
        <begin position="785"/>
        <end position="787"/>
    </location>
</feature>
<feature type="helix" evidence="80">
    <location>
        <begin position="788"/>
        <end position="807"/>
    </location>
</feature>
<feature type="strand" evidence="80">
    <location>
        <begin position="810"/>
        <end position="813"/>
    </location>
</feature>
<feature type="helix" evidence="80">
    <location>
        <begin position="823"/>
        <end position="840"/>
    </location>
</feature>
<feature type="helix" evidence="80">
    <location>
        <begin position="847"/>
        <end position="862"/>
    </location>
</feature>
<feature type="helix" evidence="80">
    <location>
        <begin position="865"/>
        <end position="878"/>
    </location>
</feature>
<feature type="turn" evidence="80">
    <location>
        <begin position="879"/>
        <end position="881"/>
    </location>
</feature>
<feature type="helix" evidence="80">
    <location>
        <begin position="882"/>
        <end position="902"/>
    </location>
</feature>
<feature type="helix" evidence="80">
    <location>
        <begin position="904"/>
        <end position="909"/>
    </location>
</feature>
<feature type="strand" evidence="80">
    <location>
        <begin position="914"/>
        <end position="919"/>
    </location>
</feature>
<feature type="helix" evidence="80">
    <location>
        <begin position="928"/>
        <end position="938"/>
    </location>
</feature>
<feature type="turn" evidence="80">
    <location>
        <begin position="939"/>
        <end position="941"/>
    </location>
</feature>
<feature type="helix" evidence="80">
    <location>
        <begin position="944"/>
        <end position="954"/>
    </location>
</feature>
<feature type="helix" evidence="80">
    <location>
        <begin position="956"/>
        <end position="985"/>
    </location>
</feature>
<feature type="helix" evidence="79">
    <location>
        <begin position="1114"/>
        <end position="1116"/>
    </location>
</feature>
<feature type="turn" evidence="80">
    <location>
        <begin position="1192"/>
        <end position="1194"/>
    </location>
</feature>
<feature type="helix" evidence="80">
    <location>
        <begin position="1195"/>
        <end position="1205"/>
    </location>
</feature>
<feature type="helix" evidence="80">
    <location>
        <begin position="1208"/>
        <end position="1223"/>
    </location>
</feature>
<feature type="helix" evidence="80">
    <location>
        <begin position="1224"/>
        <end position="1227"/>
    </location>
</feature>
<feature type="helix" evidence="80">
    <location>
        <begin position="1232"/>
        <end position="1235"/>
    </location>
</feature>
<feature type="strand" evidence="80">
    <location>
        <begin position="1236"/>
        <end position="1238"/>
    </location>
</feature>
<feature type="helix" evidence="80">
    <location>
        <begin position="1239"/>
        <end position="1264"/>
    </location>
</feature>
<feature type="helix" evidence="80">
    <location>
        <begin position="1266"/>
        <end position="1269"/>
    </location>
</feature>
<feature type="helix" evidence="80">
    <location>
        <begin position="1273"/>
        <end position="1294"/>
    </location>
</feature>
<feature type="helix" evidence="80">
    <location>
        <begin position="1302"/>
        <end position="1305"/>
    </location>
</feature>
<feature type="helix" evidence="80">
    <location>
        <begin position="1306"/>
        <end position="1316"/>
    </location>
</feature>
<feature type="turn" evidence="80">
    <location>
        <begin position="1317"/>
        <end position="1319"/>
    </location>
</feature>
<feature type="helix" evidence="80">
    <location>
        <begin position="1321"/>
        <end position="1330"/>
    </location>
</feature>
<feature type="helix" evidence="80">
    <location>
        <begin position="1331"/>
        <end position="1333"/>
    </location>
</feature>
<feature type="helix" evidence="80">
    <location>
        <begin position="1334"/>
        <end position="1358"/>
    </location>
</feature>
<feature type="strand" evidence="80">
    <location>
        <begin position="1360"/>
        <end position="1363"/>
    </location>
</feature>
<feature type="strand" evidence="80">
    <location>
        <begin position="1365"/>
        <end position="1367"/>
    </location>
</feature>
<feature type="turn" evidence="80">
    <location>
        <begin position="1369"/>
        <end position="1371"/>
    </location>
</feature>
<feature type="turn" evidence="80">
    <location>
        <begin position="1377"/>
        <end position="1379"/>
    </location>
</feature>
<feature type="helix" evidence="80">
    <location>
        <begin position="1383"/>
        <end position="1390"/>
    </location>
</feature>
<feature type="turn" evidence="80">
    <location>
        <begin position="1391"/>
        <end position="1393"/>
    </location>
</feature>
<feature type="strand" evidence="80">
    <location>
        <begin position="1397"/>
        <end position="1399"/>
    </location>
</feature>
<feature type="strand" evidence="80">
    <location>
        <begin position="1402"/>
        <end position="1408"/>
    </location>
</feature>
<feature type="helix" evidence="80">
    <location>
        <begin position="1409"/>
        <end position="1420"/>
    </location>
</feature>
<feature type="helix" evidence="80">
    <location>
        <begin position="1424"/>
        <end position="1432"/>
    </location>
</feature>
<feature type="turn" evidence="80">
    <location>
        <begin position="1443"/>
        <end position="1446"/>
    </location>
</feature>
<feature type="helix" evidence="80">
    <location>
        <begin position="1447"/>
        <end position="1449"/>
    </location>
</feature>
<feature type="helix" evidence="80">
    <location>
        <begin position="1450"/>
        <end position="1459"/>
    </location>
</feature>
<feature type="turn" evidence="80">
    <location>
        <begin position="1460"/>
        <end position="1462"/>
    </location>
</feature>
<feature type="helix" evidence="80">
    <location>
        <begin position="1463"/>
        <end position="1482"/>
    </location>
</feature>
<feature type="helix" evidence="80">
    <location>
        <begin position="1492"/>
        <end position="1496"/>
    </location>
</feature>
<feature type="turn" evidence="80">
    <location>
        <begin position="1497"/>
        <end position="1500"/>
    </location>
</feature>
<feature type="helix" evidence="80">
    <location>
        <begin position="1501"/>
        <end position="1505"/>
    </location>
</feature>
<feature type="helix" evidence="80">
    <location>
        <begin position="1520"/>
        <end position="1528"/>
    </location>
</feature>
<feature type="helix" evidence="80">
    <location>
        <begin position="1531"/>
        <end position="1549"/>
    </location>
</feature>
<feature type="helix" evidence="80">
    <location>
        <begin position="1557"/>
        <end position="1584"/>
    </location>
</feature>
<feature type="helix" evidence="80">
    <location>
        <begin position="1593"/>
        <end position="1615"/>
    </location>
</feature>
<feature type="helix" evidence="80">
    <location>
        <begin position="1622"/>
        <end position="1628"/>
    </location>
</feature>
<feature type="helix" evidence="80">
    <location>
        <begin position="1629"/>
        <end position="1633"/>
    </location>
</feature>
<feature type="helix" evidence="80">
    <location>
        <begin position="1636"/>
        <end position="1641"/>
    </location>
</feature>
<feature type="helix" evidence="80">
    <location>
        <begin position="1646"/>
        <end position="1654"/>
    </location>
</feature>
<feature type="helix" evidence="80">
    <location>
        <begin position="1657"/>
        <end position="1681"/>
    </location>
</feature>
<feature type="strand" evidence="80">
    <location>
        <begin position="1682"/>
        <end position="1685"/>
    </location>
</feature>
<feature type="strand" evidence="80">
    <location>
        <begin position="1693"/>
        <end position="1699"/>
    </location>
</feature>
<feature type="helix" evidence="80">
    <location>
        <begin position="1700"/>
        <end position="1710"/>
    </location>
</feature>
<feature type="turn" evidence="80">
    <location>
        <begin position="1711"/>
        <end position="1715"/>
    </location>
</feature>
<feature type="helix" evidence="80">
    <location>
        <begin position="1716"/>
        <end position="1720"/>
    </location>
</feature>
<feature type="turn" evidence="80">
    <location>
        <begin position="1721"/>
        <end position="1723"/>
    </location>
</feature>
<feature type="turn" evidence="80">
    <location>
        <begin position="1728"/>
        <end position="1730"/>
    </location>
</feature>
<feature type="helix" evidence="80">
    <location>
        <begin position="1749"/>
        <end position="1784"/>
    </location>
</feature>
<feature type="helix" evidence="78">
    <location>
        <begin position="1792"/>
        <end position="1805"/>
    </location>
</feature>
<feature type="strand" evidence="78">
    <location>
        <begin position="1811"/>
        <end position="1814"/>
    </location>
</feature>
<feature type="turn" evidence="78">
    <location>
        <begin position="1815"/>
        <end position="1817"/>
    </location>
</feature>
<feature type="helix" evidence="78">
    <location>
        <begin position="1818"/>
        <end position="1823"/>
    </location>
</feature>
<feature type="turn" evidence="78">
    <location>
        <begin position="1827"/>
        <end position="1829"/>
    </location>
</feature>
<feature type="helix" evidence="78">
    <location>
        <begin position="1836"/>
        <end position="1839"/>
    </location>
</feature>
<feature type="strand" evidence="78">
    <location>
        <begin position="1845"/>
        <end position="1847"/>
    </location>
</feature>
<feature type="turn" evidence="78">
    <location>
        <begin position="1848"/>
        <end position="1850"/>
    </location>
</feature>
<feature type="strand" evidence="78">
    <location>
        <begin position="1851"/>
        <end position="1853"/>
    </location>
</feature>
<feature type="helix" evidence="78">
    <location>
        <begin position="1854"/>
        <end position="1866"/>
    </location>
</feature>
<feature type="helix" evidence="78">
    <location>
        <begin position="1870"/>
        <end position="1886"/>
    </location>
</feature>
<feature type="helix" evidence="78">
    <location>
        <begin position="1900"/>
        <end position="1926"/>
    </location>
</feature>
<sequence>MAQSVLVPPGPDSFRFFTRESLAAIEQRIAEEKAKRPKQERKDEDDENGPKPNSDLEAGKSLPFIYGDIPPEMVSVPLEDLDPYYINKKTFIVLNKGKAISRFSATPALYILTPFNPIRKLAIKILVHSLFNMLIMCTILTNCVFMTMSNPPDWTKNVEYTFTGIYTFESLIKILARGFCLEDFTFLRDPWNWLDFTVITFAYVTEFVDLGNVSALRTFRVLRALKTISVIPGLKTIVGALIQSVKKLSDVMILTVFCLSVFALIGLQLFMGNLRNKCLQWPPDNSSFEINITSFFNNSLDGNGTTFNRTVSIFNWDEYIEDKSHFYFLEGQNDALLCGNSSDAGQCPEGYICVKAGRNPNYGYTSFDTFSWAFLSLFRLMTQDFWENLYQLTLRAAGKTYMIFFVLVIFLGSFYLINLILAVVAMAYEEQNQATLEEAEQKEAEFQQMLEQLKKQQEEAQAAAAAASAESRDFSGAGGIGVFSESSSVASKLSSKSEKELKNRRKKKKQKEQSGEEEKNDRVRKSESEDSIRRKGFRFSLEGSRLTYEKRFSSPHQSLLSIRGSLFSPRRNSRASLFSFRGRAKDIGSENDFADDEHSTFEDNDSRRDSLFVPHRHGERRHSNVSQASRASRVLPILPMNGKMHSAVDCNGVVSLVGGPSTLTSAGQLLPEGTTTETEIRKRRSSSYHVSMDLLEDPTSRQRAMSIASILTNTMEELEESRQKCPPCWYKFANMCLIWDCCKPWLKVKHLVNLVVMDPFVDLAITICIVLNTLFMAMEHYPMTEQFSSVLSVGNLVFTGIFTAEMFLKIIAMDPYYYFQEGWNIFDGFIVSLSLMELGLANVEGLSVLRSFRLLRVFKLAKSWPTLNMLIKIIGNSVGALGNLTLVLAIIVFIFAVVGMQLFGKSYKECVCKISNDCELPRWHMHDFFHSFLIVFRVLCGEWIETMWDCMEVAGQTMCLTVFMMVMVIGNLVVLNLFLALLLSSFSSDNLAATDDDNEMNNLQIAVGRMQKGIDFVKRKIREFIQKAFVRKQKALDEIKPLEDLNNKKDSCISNHTTIEIGKDLNYLKDGNGTTSGIGSSVEKYVVDESDYMSFINNPSLTVTVPIAVGESDFENLNTEEFSSESDMEESKEKLNATSSSEGSTVDIGAPAEGEQPEVEPEESLEPEACFTEDCVRKFKCCQISIEEGKGKLWWNLRKTCYKIVEHNWFETFIVFMILLSSGALAFEDIYIEQRKTIKTMLEYADKVFTYIFILEMLLKWVAYGFQVYFTNAWCWLDFLIVDVSLVSLTANALGYSELGAIKSLRTLRALRPLRALSRFEGMRVVVNALLGAIPSIMNVLLVCLIFWLIFSIMGVNLFAGKFYHCINYTTGEMFDVSVVNNYSECKALIESNQTARWKNVKVNFDNVGLGYLSLLQVATFKGWMDIMYAAVDSRNVELQPKYEDNLYMYLYFVIFIIFGSFFTLNLFIGVIIDNFNQQKKKFGGQDIFMTEEQKKYYNAMKKLGSKKPQKPIPRPANKFQGMVFDFVTKQVFDISIMILICLNMVTMMVETDDQSQEMTNILYWINLVFIVLFTGECVLKLISLRYYYFTIGWNIFDFVVVILSIVGMFLAELIEKYFVSPTLFRVIRLARIGRILRLIKGAKGIRTLLFALMMSLPALFNIGLLLFLVMFIYAIFGMSNFAYVKREVGIDDMFNFETFGNSMICLFQITTSAGWDGLLAPILNSGPPDCDPDKDHPGSSVKGDCGNPSVGIFFFVSYIIISFLVVVNMYIAVILENFSVATEESAEPLSEDDFEMFYEVWEKFDPDATQFIEFAKLSDFADALDPPLLIAKPNKVQLIAMDLPMVSGDRIHCLDILFAFTKRVLGESGEMDALRIQMEERFMASNPSKVSYEPITTTLKRKQEEVSAIIIQRAYRRYLLKQKVKKVSSIYKKDKGKECDGTPIKEDTLIDKLNENSTPEKTDMTPSTTSPPSYDSVTKPEKEKFEKDKSEKEDKGKDIRESKK</sequence>
<keyword id="KW-0002">3D-structure</keyword>
<keyword id="KW-0025">Alternative splicing</keyword>
<keyword id="KW-1003">Cell membrane</keyword>
<keyword id="KW-0225">Disease variant</keyword>
<keyword id="KW-1015">Disulfide bond</keyword>
<keyword id="KW-0887">Epilepsy</keyword>
<keyword id="KW-0325">Glycoprotein</keyword>
<keyword id="KW-0407">Ion channel</keyword>
<keyword id="KW-0406">Ion transport</keyword>
<keyword id="KW-1017">Isopeptide bond</keyword>
<keyword id="KW-0472">Membrane</keyword>
<keyword id="KW-0597">Phosphoprotein</keyword>
<keyword id="KW-1267">Proteomics identification</keyword>
<keyword id="KW-1185">Reference proteome</keyword>
<keyword id="KW-0677">Repeat</keyword>
<keyword id="KW-0915">Sodium</keyword>
<keyword id="KW-0894">Sodium channel</keyword>
<keyword id="KW-0739">Sodium transport</keyword>
<keyword id="KW-0812">Transmembrane</keyword>
<keyword id="KW-1133">Transmembrane helix</keyword>
<keyword id="KW-0813">Transport</keyword>
<keyword id="KW-0832">Ubl conjugation</keyword>
<keyword id="KW-0851">Voltage-gated channel</keyword>
<name>SCN2A_HUMAN</name>
<dbReference type="EMBL" id="M94055">
    <property type="protein sequence ID" value="AAA18895.1"/>
    <property type="molecule type" value="mRNA"/>
</dbReference>
<dbReference type="EMBL" id="AF059683">
    <property type="protein sequence ID" value="AAC14574.1"/>
    <property type="molecule type" value="Genomic_DNA"/>
</dbReference>
<dbReference type="EMBL" id="AF327246">
    <property type="protein sequence ID" value="AAG53413.1"/>
    <property type="molecule type" value="Genomic_DNA"/>
</dbReference>
<dbReference type="EMBL" id="AF327226">
    <property type="protein sequence ID" value="AAG53413.1"/>
    <property type="status" value="JOINED"/>
    <property type="molecule type" value="Genomic_DNA"/>
</dbReference>
<dbReference type="EMBL" id="AF327227">
    <property type="protein sequence ID" value="AAG53413.1"/>
    <property type="status" value="JOINED"/>
    <property type="molecule type" value="Genomic_DNA"/>
</dbReference>
<dbReference type="EMBL" id="AF327228">
    <property type="protein sequence ID" value="AAG53413.1"/>
    <property type="status" value="JOINED"/>
    <property type="molecule type" value="Genomic_DNA"/>
</dbReference>
<dbReference type="EMBL" id="AF327229">
    <property type="protein sequence ID" value="AAG53413.1"/>
    <property type="status" value="JOINED"/>
    <property type="molecule type" value="Genomic_DNA"/>
</dbReference>
<dbReference type="EMBL" id="AF327230">
    <property type="protein sequence ID" value="AAG53413.1"/>
    <property type="status" value="JOINED"/>
    <property type="molecule type" value="Genomic_DNA"/>
</dbReference>
<dbReference type="EMBL" id="AF327231">
    <property type="protein sequence ID" value="AAG53413.1"/>
    <property type="status" value="JOINED"/>
    <property type="molecule type" value="Genomic_DNA"/>
</dbReference>
<dbReference type="EMBL" id="AF327232">
    <property type="protein sequence ID" value="AAG53413.1"/>
    <property type="status" value="JOINED"/>
    <property type="molecule type" value="Genomic_DNA"/>
</dbReference>
<dbReference type="EMBL" id="AF327233">
    <property type="protein sequence ID" value="AAG53413.1"/>
    <property type="status" value="JOINED"/>
    <property type="molecule type" value="Genomic_DNA"/>
</dbReference>
<dbReference type="EMBL" id="AF327234">
    <property type="protein sequence ID" value="AAG53413.1"/>
    <property type="status" value="JOINED"/>
    <property type="molecule type" value="Genomic_DNA"/>
</dbReference>
<dbReference type="EMBL" id="AF327235">
    <property type="protein sequence ID" value="AAG53413.1"/>
    <property type="status" value="JOINED"/>
    <property type="molecule type" value="Genomic_DNA"/>
</dbReference>
<dbReference type="EMBL" id="AF327236">
    <property type="protein sequence ID" value="AAG53413.1"/>
    <property type="status" value="JOINED"/>
    <property type="molecule type" value="Genomic_DNA"/>
</dbReference>
<dbReference type="EMBL" id="AF327237">
    <property type="protein sequence ID" value="AAG53413.1"/>
    <property type="status" value="JOINED"/>
    <property type="molecule type" value="Genomic_DNA"/>
</dbReference>
<dbReference type="EMBL" id="AF327238">
    <property type="protein sequence ID" value="AAG53413.1"/>
    <property type="status" value="JOINED"/>
    <property type="molecule type" value="Genomic_DNA"/>
</dbReference>
<dbReference type="EMBL" id="AF327239">
    <property type="protein sequence ID" value="AAG53413.1"/>
    <property type="status" value="JOINED"/>
    <property type="molecule type" value="Genomic_DNA"/>
</dbReference>
<dbReference type="EMBL" id="AF327240">
    <property type="protein sequence ID" value="AAG53413.1"/>
    <property type="status" value="JOINED"/>
    <property type="molecule type" value="Genomic_DNA"/>
</dbReference>
<dbReference type="EMBL" id="AF327241">
    <property type="protein sequence ID" value="AAG53413.1"/>
    <property type="status" value="JOINED"/>
    <property type="molecule type" value="Genomic_DNA"/>
</dbReference>
<dbReference type="EMBL" id="AF327242">
    <property type="protein sequence ID" value="AAG53413.1"/>
    <property type="status" value="JOINED"/>
    <property type="molecule type" value="Genomic_DNA"/>
</dbReference>
<dbReference type="EMBL" id="AF327243">
    <property type="protein sequence ID" value="AAG53413.1"/>
    <property type="status" value="JOINED"/>
    <property type="molecule type" value="Genomic_DNA"/>
</dbReference>
<dbReference type="EMBL" id="AF327244">
    <property type="protein sequence ID" value="AAG53413.1"/>
    <property type="status" value="JOINED"/>
    <property type="molecule type" value="Genomic_DNA"/>
</dbReference>
<dbReference type="EMBL" id="AF327245">
    <property type="protein sequence ID" value="AAG53413.1"/>
    <property type="status" value="JOINED"/>
    <property type="molecule type" value="Genomic_DNA"/>
</dbReference>
<dbReference type="EMBL" id="AF327246">
    <property type="protein sequence ID" value="AAG53412.1"/>
    <property type="molecule type" value="Genomic_DNA"/>
</dbReference>
<dbReference type="EMBL" id="AF327226">
    <property type="protein sequence ID" value="AAG53412.1"/>
    <property type="status" value="JOINED"/>
    <property type="molecule type" value="Genomic_DNA"/>
</dbReference>
<dbReference type="EMBL" id="AF327227">
    <property type="protein sequence ID" value="AAG53412.1"/>
    <property type="status" value="JOINED"/>
    <property type="molecule type" value="Genomic_DNA"/>
</dbReference>
<dbReference type="EMBL" id="AF327228">
    <property type="protein sequence ID" value="AAG53412.1"/>
    <property type="status" value="JOINED"/>
    <property type="molecule type" value="Genomic_DNA"/>
</dbReference>
<dbReference type="EMBL" id="AF327229">
    <property type="protein sequence ID" value="AAG53412.1"/>
    <property type="status" value="JOINED"/>
    <property type="molecule type" value="Genomic_DNA"/>
</dbReference>
<dbReference type="EMBL" id="AF327230">
    <property type="protein sequence ID" value="AAG53412.1"/>
    <property type="status" value="JOINED"/>
    <property type="molecule type" value="Genomic_DNA"/>
</dbReference>
<dbReference type="EMBL" id="AF327231">
    <property type="protein sequence ID" value="AAG53412.1"/>
    <property type="status" value="JOINED"/>
    <property type="molecule type" value="Genomic_DNA"/>
</dbReference>
<dbReference type="EMBL" id="AF327232">
    <property type="protein sequence ID" value="AAG53412.1"/>
    <property type="status" value="JOINED"/>
    <property type="molecule type" value="Genomic_DNA"/>
</dbReference>
<dbReference type="EMBL" id="AF327233">
    <property type="protein sequence ID" value="AAG53412.1"/>
    <property type="status" value="JOINED"/>
    <property type="molecule type" value="Genomic_DNA"/>
</dbReference>
<dbReference type="EMBL" id="AF327234">
    <property type="protein sequence ID" value="AAG53412.1"/>
    <property type="status" value="JOINED"/>
    <property type="molecule type" value="Genomic_DNA"/>
</dbReference>
<dbReference type="EMBL" id="AF327235">
    <property type="protein sequence ID" value="AAG53412.1"/>
    <property type="status" value="JOINED"/>
    <property type="molecule type" value="Genomic_DNA"/>
</dbReference>
<dbReference type="EMBL" id="AF327236">
    <property type="protein sequence ID" value="AAG53412.1"/>
    <property type="status" value="JOINED"/>
    <property type="molecule type" value="Genomic_DNA"/>
</dbReference>
<dbReference type="EMBL" id="AF327237">
    <property type="protein sequence ID" value="AAG53412.1"/>
    <property type="status" value="JOINED"/>
    <property type="molecule type" value="Genomic_DNA"/>
</dbReference>
<dbReference type="EMBL" id="AF327238">
    <property type="protein sequence ID" value="AAG53412.1"/>
    <property type="status" value="JOINED"/>
    <property type="molecule type" value="Genomic_DNA"/>
</dbReference>
<dbReference type="EMBL" id="AF327239">
    <property type="protein sequence ID" value="AAG53412.1"/>
    <property type="status" value="JOINED"/>
    <property type="molecule type" value="Genomic_DNA"/>
</dbReference>
<dbReference type="EMBL" id="AF327240">
    <property type="protein sequence ID" value="AAG53412.1"/>
    <property type="status" value="JOINED"/>
    <property type="molecule type" value="Genomic_DNA"/>
</dbReference>
<dbReference type="EMBL" id="AF327241">
    <property type="protein sequence ID" value="AAG53412.1"/>
    <property type="status" value="JOINED"/>
    <property type="molecule type" value="Genomic_DNA"/>
</dbReference>
<dbReference type="EMBL" id="AF327242">
    <property type="protein sequence ID" value="AAG53412.1"/>
    <property type="status" value="JOINED"/>
    <property type="molecule type" value="Genomic_DNA"/>
</dbReference>
<dbReference type="EMBL" id="AF327243">
    <property type="protein sequence ID" value="AAG53412.1"/>
    <property type="status" value="JOINED"/>
    <property type="molecule type" value="Genomic_DNA"/>
</dbReference>
<dbReference type="EMBL" id="AF327244">
    <property type="protein sequence ID" value="AAG53412.1"/>
    <property type="status" value="JOINED"/>
    <property type="molecule type" value="Genomic_DNA"/>
</dbReference>
<dbReference type="EMBL" id="AF327245">
    <property type="protein sequence ID" value="AAG53412.1"/>
    <property type="status" value="JOINED"/>
    <property type="molecule type" value="Genomic_DNA"/>
</dbReference>
<dbReference type="EMBL" id="AC011303">
    <property type="protein sequence ID" value="AAY14971.1"/>
    <property type="molecule type" value="Genomic_DNA"/>
</dbReference>
<dbReference type="EMBL" id="AC013438">
    <property type="status" value="NOT_ANNOTATED_CDS"/>
    <property type="molecule type" value="Genomic_DNA"/>
</dbReference>
<dbReference type="EMBL" id="X65361">
    <property type="protein sequence ID" value="CAA46438.1"/>
    <property type="status" value="ALT_SEQ"/>
    <property type="molecule type" value="mRNA"/>
</dbReference>
<dbReference type="EMBL" id="M91804">
    <property type="status" value="NOT_ANNOTATED_CDS"/>
    <property type="molecule type" value="mRNA"/>
</dbReference>
<dbReference type="EMBL" id="M55662">
    <property type="protein sequence ID" value="AAB65854.2"/>
    <property type="molecule type" value="Genomic_DNA"/>
</dbReference>
<dbReference type="CCDS" id="CCDS33313.1">
    <molecule id="Q99250-2"/>
</dbReference>
<dbReference type="CCDS" id="CCDS33314.1">
    <molecule id="Q99250-1"/>
</dbReference>
<dbReference type="PIR" id="A46269">
    <property type="entry name" value="A46269"/>
</dbReference>
<dbReference type="PIR" id="I59194">
    <property type="entry name" value="I59194"/>
</dbReference>
<dbReference type="RefSeq" id="NP_001035232.1">
    <molecule id="Q99250-1"/>
    <property type="nucleotide sequence ID" value="NM_001040142.2"/>
</dbReference>
<dbReference type="RefSeq" id="NP_001035233.1">
    <molecule id="Q99250-2"/>
    <property type="nucleotide sequence ID" value="NM_001040143.2"/>
</dbReference>
<dbReference type="RefSeq" id="NP_001358175.1">
    <molecule id="Q99250-2"/>
    <property type="nucleotide sequence ID" value="NM_001371246.1"/>
</dbReference>
<dbReference type="RefSeq" id="NP_001358176.1">
    <molecule id="Q99250-1"/>
    <property type="nucleotide sequence ID" value="NM_001371247.1"/>
</dbReference>
<dbReference type="RefSeq" id="NP_066287.2">
    <molecule id="Q99250-1"/>
    <property type="nucleotide sequence ID" value="NM_021007.3"/>
</dbReference>
<dbReference type="RefSeq" id="XP_005246810.1">
    <property type="nucleotide sequence ID" value="XM_005246753.3"/>
</dbReference>
<dbReference type="RefSeq" id="XP_016860144.1">
    <property type="nucleotide sequence ID" value="XM_017004655.1"/>
</dbReference>
<dbReference type="RefSeq" id="XP_016860145.1">
    <property type="nucleotide sequence ID" value="XM_017004656.1"/>
</dbReference>
<dbReference type="RefSeq" id="XP_016860146.1">
    <property type="nucleotide sequence ID" value="XM_017004657.1"/>
</dbReference>
<dbReference type="PDB" id="2KAV">
    <property type="method" value="NMR"/>
    <property type="chains" value="A=1777-1882"/>
</dbReference>
<dbReference type="PDB" id="4JPZ">
    <property type="method" value="X-ray"/>
    <property type="resolution" value="3.02 A"/>
    <property type="chains" value="B/H=1777-1937"/>
</dbReference>
<dbReference type="PDB" id="4RLY">
    <property type="method" value="X-ray"/>
    <property type="resolution" value="2.50 A"/>
    <property type="chains" value="A=1102-1120"/>
</dbReference>
<dbReference type="PDB" id="6BUT">
    <property type="method" value="NMR"/>
    <property type="chains" value="B=1901-1927"/>
</dbReference>
<dbReference type="PDB" id="6J8E">
    <property type="method" value="EM"/>
    <property type="resolution" value="3.00 A"/>
    <property type="chains" value="A=1-2005"/>
</dbReference>
<dbReference type="PDBsum" id="2KAV"/>
<dbReference type="PDBsum" id="4JPZ"/>
<dbReference type="PDBsum" id="4RLY"/>
<dbReference type="PDBsum" id="6BUT"/>
<dbReference type="PDBsum" id="6J8E"/>
<dbReference type="BMRB" id="Q99250"/>
<dbReference type="EMDB" id="EMD-9780"/>
<dbReference type="SMR" id="Q99250"/>
<dbReference type="BioGRID" id="112231">
    <property type="interactions" value="5"/>
</dbReference>
<dbReference type="ComplexPortal" id="CPX-8643">
    <property type="entry name" value="Nav1.2 voltage-gated sodium channel complex, SCN1B-SCN2B variant"/>
</dbReference>
<dbReference type="ComplexPortal" id="CPX-8644">
    <property type="entry name" value="Nav1.2 voltage-gated sodium channel complex, SCN2B-SCN3B variant"/>
</dbReference>
<dbReference type="ComplexPortal" id="CPX-8645">
    <property type="entry name" value="Nav1.2 voltage-gated sodium channel complex, SCN1B-SCN4B variant"/>
</dbReference>
<dbReference type="ComplexPortal" id="CPX-8646">
    <property type="entry name" value="Nav1.2 voltage-gated sodium channel complex, SCN3B-SCN4B variant"/>
</dbReference>
<dbReference type="CORUM" id="Q99250"/>
<dbReference type="FunCoup" id="Q99250">
    <property type="interactions" value="688"/>
</dbReference>
<dbReference type="IntAct" id="Q99250">
    <property type="interactions" value="67"/>
</dbReference>
<dbReference type="MINT" id="Q99250"/>
<dbReference type="STRING" id="9606.ENSP00000490107"/>
<dbReference type="BindingDB" id="Q99250"/>
<dbReference type="ChEMBL" id="CHEMBL4187"/>
<dbReference type="DrugBank" id="DB13908">
    <property type="generic name" value="Amylmetacresol"/>
</dbReference>
<dbReference type="DrugBank" id="DB09088">
    <property type="generic name" value="Amylocaine"/>
</dbReference>
<dbReference type="DrugBank" id="DB09009">
    <property type="generic name" value="Articaine"/>
</dbReference>
<dbReference type="DrugBank" id="DB13746">
    <property type="generic name" value="Bioallethrin"/>
</dbReference>
<dbReference type="DrugBank" id="DB05541">
    <property type="generic name" value="Brivaracetam"/>
</dbReference>
<dbReference type="DrugBank" id="DB00564">
    <property type="generic name" value="Carbamazepine"/>
</dbReference>
<dbReference type="DrugBank" id="DB06119">
    <property type="generic name" value="Cenobamate"/>
</dbReference>
<dbReference type="DrugBank" id="DB01161">
    <property type="generic name" value="Chloroprocaine"/>
</dbReference>
<dbReference type="DrugBank" id="DB00907">
    <property type="generic name" value="Cocaine"/>
</dbReference>
<dbReference type="DrugBank" id="DB13269">
    <property type="generic name" value="Dichlorobenzyl alcohol"/>
</dbReference>
<dbReference type="DrugBank" id="DB13961">
    <property type="generic name" value="Fish oil"/>
</dbReference>
<dbReference type="DrugBank" id="DB00555">
    <property type="generic name" value="Lamotrigine"/>
</dbReference>
<dbReference type="DrugBank" id="DB13520">
    <property type="generic name" value="Metergoline"/>
</dbReference>
<dbReference type="DrugBank" id="DB00776">
    <property type="generic name" value="Oxcarbazepine"/>
</dbReference>
<dbReference type="DrugBank" id="DB11186">
    <property type="generic name" value="Pentoxyverine"/>
</dbReference>
<dbReference type="DrugBank" id="DB00252">
    <property type="generic name" value="Phenytoin"/>
</dbReference>
<dbReference type="DrugBank" id="DB09345">
    <property type="generic name" value="Pramocaine"/>
</dbReference>
<dbReference type="DrugBank" id="DB01069">
    <property type="generic name" value="Promethazine"/>
</dbReference>
<dbReference type="DrugBank" id="DB00818">
    <property type="generic name" value="Propofol"/>
</dbReference>
<dbReference type="DrugBank" id="DB09342">
    <property type="generic name" value="Propoxycaine"/>
</dbReference>
<dbReference type="DrugBank" id="DB00243">
    <property type="generic name" value="Ranolazine"/>
</dbReference>
<dbReference type="DrugBank" id="DB09085">
    <property type="generic name" value="Tetracaine"/>
</dbReference>
<dbReference type="DrugBank" id="DB05232">
    <property type="generic name" value="Tetrodotoxin"/>
</dbReference>
<dbReference type="DrugBank" id="DB00273">
    <property type="generic name" value="Topiramate"/>
</dbReference>
<dbReference type="DrugBank" id="DB00193">
    <property type="generic name" value="Tramadol"/>
</dbReference>
<dbReference type="DrugBank" id="DB00313">
    <property type="generic name" value="Valproic acid"/>
</dbReference>
<dbReference type="DrugBank" id="DB00909">
    <property type="generic name" value="Zonisamide"/>
</dbReference>
<dbReference type="DrugCentral" id="Q99250"/>
<dbReference type="GuidetoPHARMACOLOGY" id="579"/>
<dbReference type="TCDB" id="1.A.1.10.12">
    <property type="family name" value="the voltage-gated ion channel (vic) superfamily"/>
</dbReference>
<dbReference type="GlyCosmos" id="Q99250">
    <property type="glycosylation" value="10 sites, No reported glycans"/>
</dbReference>
<dbReference type="GlyGen" id="Q99250">
    <property type="glycosylation" value="12 sites, 1 O-linked glycan (1 site)"/>
</dbReference>
<dbReference type="iPTMnet" id="Q99250"/>
<dbReference type="PhosphoSitePlus" id="Q99250"/>
<dbReference type="SwissPalm" id="Q99250"/>
<dbReference type="BioMuta" id="SCN2A"/>
<dbReference type="DMDM" id="25014053"/>
<dbReference type="jPOST" id="Q99250"/>
<dbReference type="MassIVE" id="Q99250"/>
<dbReference type="PaxDb" id="9606-ENSP00000364586"/>
<dbReference type="PeptideAtlas" id="Q99250"/>
<dbReference type="ProteomicsDB" id="78253">
    <molecule id="Q99250-1"/>
</dbReference>
<dbReference type="ProteomicsDB" id="78254">
    <molecule id="Q99250-2"/>
</dbReference>
<dbReference type="ABCD" id="Q99250">
    <property type="antibodies" value="1 sequenced antibody"/>
</dbReference>
<dbReference type="Antibodypedia" id="33769">
    <property type="antibodies" value="181 antibodies from 24 providers"/>
</dbReference>
<dbReference type="DNASU" id="6326"/>
<dbReference type="Ensembl" id="ENST00000283256.10">
    <molecule id="Q99250-1"/>
    <property type="protein sequence ID" value="ENSP00000283256.6"/>
    <property type="gene ID" value="ENSG00000136531.19"/>
</dbReference>
<dbReference type="Ensembl" id="ENST00000375437.7">
    <molecule id="Q99250-1"/>
    <property type="protein sequence ID" value="ENSP00000364586.2"/>
    <property type="gene ID" value="ENSG00000136531.19"/>
</dbReference>
<dbReference type="Ensembl" id="ENST00000631182.3">
    <molecule id="Q99250-2"/>
    <property type="protein sequence ID" value="ENSP00000486885.1"/>
    <property type="gene ID" value="ENSG00000136531.19"/>
</dbReference>
<dbReference type="Ensembl" id="ENST00000636071.2">
    <molecule id="Q99250-2"/>
    <property type="protein sequence ID" value="ENSP00000490107.1"/>
    <property type="gene ID" value="ENSG00000136531.19"/>
</dbReference>
<dbReference type="Ensembl" id="ENST00000637266.2">
    <molecule id="Q99250-1"/>
    <property type="protein sequence ID" value="ENSP00000490866.1"/>
    <property type="gene ID" value="ENSG00000136531.19"/>
</dbReference>
<dbReference type="GeneID" id="6326"/>
<dbReference type="KEGG" id="hsa:6326"/>
<dbReference type="MANE-Select" id="ENST00000375437.7">
    <property type="protein sequence ID" value="ENSP00000364586.2"/>
    <property type="RefSeq nucleotide sequence ID" value="NM_001040142.2"/>
    <property type="RefSeq protein sequence ID" value="NP_001035232.1"/>
</dbReference>
<dbReference type="UCSC" id="uc002udc.4">
    <molecule id="Q99250-1"/>
    <property type="organism name" value="human"/>
</dbReference>
<dbReference type="AGR" id="HGNC:10588"/>
<dbReference type="CTD" id="6326"/>
<dbReference type="DisGeNET" id="6326"/>
<dbReference type="GeneCards" id="SCN2A"/>
<dbReference type="HGNC" id="HGNC:10588">
    <property type="gene designation" value="SCN2A"/>
</dbReference>
<dbReference type="HPA" id="ENSG00000136531">
    <property type="expression patterns" value="Tissue enriched (brain)"/>
</dbReference>
<dbReference type="MalaCards" id="SCN2A"/>
<dbReference type="MIM" id="182390">
    <property type="type" value="gene"/>
</dbReference>
<dbReference type="MIM" id="607745">
    <property type="type" value="phenotype"/>
</dbReference>
<dbReference type="MIM" id="613721">
    <property type="type" value="phenotype"/>
</dbReference>
<dbReference type="MIM" id="618924">
    <property type="type" value="phenotype"/>
</dbReference>
<dbReference type="neXtProt" id="NX_Q99250"/>
<dbReference type="OpenTargets" id="ENSG00000136531"/>
<dbReference type="Orphanet" id="33069">
    <property type="disease" value="Dravet syndrome"/>
</dbReference>
<dbReference type="Orphanet" id="1934">
    <property type="disease" value="Early infantile developmental and epileptic encephalopathy"/>
</dbReference>
<dbReference type="Orphanet" id="293181">
    <property type="disease" value="Epilepsy of infancy with migrating focal seizures"/>
</dbReference>
<dbReference type="Orphanet" id="36387">
    <property type="disease" value="Genetic epilepsy with febrile seizure plus"/>
</dbReference>
<dbReference type="Orphanet" id="3451">
    <property type="disease" value="Infantile epileptic spasms syndrome"/>
</dbReference>
<dbReference type="Orphanet" id="306">
    <property type="disease" value="Self-limited infantile epilepsy"/>
</dbReference>
<dbReference type="Orphanet" id="140927">
    <property type="disease" value="Self-limited neonatal-infantile epilepsy"/>
</dbReference>
<dbReference type="PharmGKB" id="PA35004"/>
<dbReference type="VEuPathDB" id="HostDB:ENSG00000136531"/>
<dbReference type="eggNOG" id="KOG2301">
    <property type="taxonomic scope" value="Eukaryota"/>
</dbReference>
<dbReference type="GeneTree" id="ENSGT00940000154224"/>
<dbReference type="HOGENOM" id="CLU_000540_5_0_1"/>
<dbReference type="InParanoid" id="Q99250"/>
<dbReference type="OMA" id="MEESKEX"/>
<dbReference type="OrthoDB" id="2984333at2759"/>
<dbReference type="PAN-GO" id="Q99250">
    <property type="GO annotations" value="6 GO annotations based on evolutionary models"/>
</dbReference>
<dbReference type="PhylomeDB" id="Q99250"/>
<dbReference type="TreeFam" id="TF323985"/>
<dbReference type="PathwayCommons" id="Q99250"/>
<dbReference type="Reactome" id="R-HSA-445095">
    <property type="pathway name" value="Interaction between L1 and Ankyrins"/>
</dbReference>
<dbReference type="Reactome" id="R-HSA-5576892">
    <property type="pathway name" value="Phase 0 - rapid depolarisation"/>
</dbReference>
<dbReference type="Reactome" id="R-HSA-9717207">
    <property type="pathway name" value="Sensory perception of sweet, bitter, and umami (glutamate) taste"/>
</dbReference>
<dbReference type="SignaLink" id="Q99250"/>
<dbReference type="SIGNOR" id="Q99250"/>
<dbReference type="BioGRID-ORCS" id="6326">
    <property type="hits" value="10 hits in 1156 CRISPR screens"/>
</dbReference>
<dbReference type="ChiTaRS" id="SCN2A">
    <property type="organism name" value="human"/>
</dbReference>
<dbReference type="EvolutionaryTrace" id="Q99250"/>
<dbReference type="GeneWiki" id="Nav1.2"/>
<dbReference type="GenomeRNAi" id="6326"/>
<dbReference type="Pharos" id="Q99250">
    <property type="development level" value="Tclin"/>
</dbReference>
<dbReference type="PRO" id="PR:Q99250"/>
<dbReference type="Proteomes" id="UP000005640">
    <property type="component" value="Chromosome 2"/>
</dbReference>
<dbReference type="RNAct" id="Q99250">
    <property type="molecule type" value="protein"/>
</dbReference>
<dbReference type="Bgee" id="ENSG00000136531">
    <property type="expression patterns" value="Expressed in middle temporal gyrus and 139 other cell types or tissues"/>
</dbReference>
<dbReference type="ExpressionAtlas" id="Q99250">
    <property type="expression patterns" value="baseline and differential"/>
</dbReference>
<dbReference type="GO" id="GO:0030424">
    <property type="term" value="C:axon"/>
    <property type="evidence" value="ECO:0000304"/>
    <property type="project" value="BHF-UCL"/>
</dbReference>
<dbReference type="GO" id="GO:0016020">
    <property type="term" value="C:membrane"/>
    <property type="evidence" value="ECO:0000250"/>
    <property type="project" value="UniProtKB"/>
</dbReference>
<dbReference type="GO" id="GO:0033268">
    <property type="term" value="C:node of Ranvier"/>
    <property type="evidence" value="ECO:0000250"/>
    <property type="project" value="BHF-UCL"/>
</dbReference>
<dbReference type="GO" id="GO:0005886">
    <property type="term" value="C:plasma membrane"/>
    <property type="evidence" value="ECO:0000314"/>
    <property type="project" value="UniProtKB"/>
</dbReference>
<dbReference type="GO" id="GO:0001518">
    <property type="term" value="C:voltage-gated sodium channel complex"/>
    <property type="evidence" value="ECO:0000250"/>
    <property type="project" value="UniProtKB"/>
</dbReference>
<dbReference type="GO" id="GO:0005516">
    <property type="term" value="F:calmodulin binding"/>
    <property type="evidence" value="ECO:0000315"/>
    <property type="project" value="DisProt"/>
</dbReference>
<dbReference type="GO" id="GO:0005248">
    <property type="term" value="F:voltage-gated sodium channel activity"/>
    <property type="evidence" value="ECO:0000314"/>
    <property type="project" value="UniProtKB"/>
</dbReference>
<dbReference type="GO" id="GO:0086002">
    <property type="term" value="P:cardiac muscle cell action potential involved in contraction"/>
    <property type="evidence" value="ECO:0000318"/>
    <property type="project" value="GO_Central"/>
</dbReference>
<dbReference type="GO" id="GO:0071456">
    <property type="term" value="P:cellular response to hypoxia"/>
    <property type="evidence" value="ECO:0000250"/>
    <property type="project" value="UniProtKB"/>
</dbReference>
<dbReference type="GO" id="GO:0008627">
    <property type="term" value="P:intrinsic apoptotic signaling pathway in response to osmotic stress"/>
    <property type="evidence" value="ECO:0000250"/>
    <property type="project" value="UniProtKB"/>
</dbReference>
<dbReference type="GO" id="GO:0007613">
    <property type="term" value="P:memory"/>
    <property type="evidence" value="ECO:0000250"/>
    <property type="project" value="UniProtKB"/>
</dbReference>
<dbReference type="GO" id="GO:0042552">
    <property type="term" value="P:myelination"/>
    <property type="evidence" value="ECO:0000250"/>
    <property type="project" value="BHF-UCL"/>
</dbReference>
<dbReference type="GO" id="GO:0007399">
    <property type="term" value="P:nervous system development"/>
    <property type="evidence" value="ECO:0000250"/>
    <property type="project" value="UniProtKB"/>
</dbReference>
<dbReference type="GO" id="GO:0051402">
    <property type="term" value="P:neuron apoptotic process"/>
    <property type="evidence" value="ECO:0000250"/>
    <property type="project" value="UniProtKB"/>
</dbReference>
<dbReference type="GO" id="GO:0019228">
    <property type="term" value="P:neuronal action potential"/>
    <property type="evidence" value="ECO:0000315"/>
    <property type="project" value="UniProtKB"/>
</dbReference>
<dbReference type="GO" id="GO:0035725">
    <property type="term" value="P:sodium ion transmembrane transport"/>
    <property type="evidence" value="ECO:0000318"/>
    <property type="project" value="GO_Central"/>
</dbReference>
<dbReference type="GO" id="GO:0006814">
    <property type="term" value="P:sodium ion transport"/>
    <property type="evidence" value="ECO:0000250"/>
    <property type="project" value="UniProtKB"/>
</dbReference>
<dbReference type="CDD" id="cd13433">
    <property type="entry name" value="Na_channel_gate"/>
    <property type="match status" value="1"/>
</dbReference>
<dbReference type="FunFam" id="1.10.238.10:FF:000002">
    <property type="entry name" value="Sodium channel protein"/>
    <property type="match status" value="1"/>
</dbReference>
<dbReference type="FunFam" id="1.10.287.70:FF:000001">
    <property type="entry name" value="Sodium channel protein"/>
    <property type="match status" value="1"/>
</dbReference>
<dbReference type="FunFam" id="1.10.287.70:FF:000003">
    <property type="entry name" value="Sodium channel protein"/>
    <property type="match status" value="1"/>
</dbReference>
<dbReference type="FunFam" id="1.10.287.70:FF:000006">
    <property type="entry name" value="Sodium channel protein"/>
    <property type="match status" value="1"/>
</dbReference>
<dbReference type="FunFam" id="1.20.120.350:FF:000002">
    <property type="entry name" value="Sodium channel protein"/>
    <property type="match status" value="1"/>
</dbReference>
<dbReference type="FunFam" id="1.20.120.350:FF:000004">
    <property type="entry name" value="Sodium channel protein"/>
    <property type="match status" value="1"/>
</dbReference>
<dbReference type="FunFam" id="1.20.120.350:FF:000005">
    <property type="entry name" value="Sodium channel protein"/>
    <property type="match status" value="1"/>
</dbReference>
<dbReference type="FunFam" id="1.20.5.1190:FF:000001">
    <property type="entry name" value="Sodium channel protein"/>
    <property type="match status" value="1"/>
</dbReference>
<dbReference type="FunFam" id="1.20.120.350:FF:000003">
    <property type="entry name" value="Voltage-dependent sodium channel"/>
    <property type="match status" value="1"/>
</dbReference>
<dbReference type="Gene3D" id="1.10.287.70">
    <property type="match status" value="4"/>
</dbReference>
<dbReference type="Gene3D" id="1.10.238.10">
    <property type="entry name" value="EF-hand"/>
    <property type="match status" value="1"/>
</dbReference>
<dbReference type="Gene3D" id="1.20.5.1190">
    <property type="entry name" value="iswi atpase"/>
    <property type="match status" value="1"/>
</dbReference>
<dbReference type="Gene3D" id="1.20.120.350">
    <property type="entry name" value="Voltage-gated potassium channels. Chain C"/>
    <property type="match status" value="4"/>
</dbReference>
<dbReference type="InterPro" id="IPR005821">
    <property type="entry name" value="Ion_trans_dom"/>
</dbReference>
<dbReference type="InterPro" id="IPR000048">
    <property type="entry name" value="IQ_motif_EF-hand-BS"/>
</dbReference>
<dbReference type="InterPro" id="IPR001696">
    <property type="entry name" value="Na_channel_asu"/>
</dbReference>
<dbReference type="InterPro" id="IPR044564">
    <property type="entry name" value="Na_chnl_inactivation_gate"/>
</dbReference>
<dbReference type="InterPro" id="IPR010526">
    <property type="entry name" value="Na_trans_assoc_dom"/>
</dbReference>
<dbReference type="InterPro" id="IPR024583">
    <property type="entry name" value="Na_trans_cytopl"/>
</dbReference>
<dbReference type="InterPro" id="IPR043203">
    <property type="entry name" value="VGCC_Ca_Na"/>
</dbReference>
<dbReference type="InterPro" id="IPR027359">
    <property type="entry name" value="Volt_channel_dom_sf"/>
</dbReference>
<dbReference type="PANTHER" id="PTHR10037:SF278">
    <property type="entry name" value="SODIUM CHANNEL PROTEIN TYPE 2 SUBUNIT ALPHA"/>
    <property type="match status" value="1"/>
</dbReference>
<dbReference type="PANTHER" id="PTHR10037">
    <property type="entry name" value="VOLTAGE-GATED CATION CHANNEL CALCIUM AND SODIUM"/>
    <property type="match status" value="1"/>
</dbReference>
<dbReference type="Pfam" id="PF00520">
    <property type="entry name" value="Ion_trans"/>
    <property type="match status" value="4"/>
</dbReference>
<dbReference type="Pfam" id="PF24609">
    <property type="entry name" value="IQ_SCN5A_C"/>
    <property type="match status" value="1"/>
</dbReference>
<dbReference type="Pfam" id="PF06512">
    <property type="entry name" value="Na_trans_assoc"/>
    <property type="match status" value="1"/>
</dbReference>
<dbReference type="Pfam" id="PF11933">
    <property type="entry name" value="Na_trans_cytopl"/>
    <property type="match status" value="1"/>
</dbReference>
<dbReference type="PRINTS" id="PR00170">
    <property type="entry name" value="NACHANNEL"/>
</dbReference>
<dbReference type="SMART" id="SM00015">
    <property type="entry name" value="IQ"/>
    <property type="match status" value="1"/>
</dbReference>
<dbReference type="SUPFAM" id="SSF81324">
    <property type="entry name" value="Voltage-gated potassium channels"/>
    <property type="match status" value="4"/>
</dbReference>
<dbReference type="PROSITE" id="PS50096">
    <property type="entry name" value="IQ"/>
    <property type="match status" value="1"/>
</dbReference>
<accession>Q99250</accession>
<accession>A6NC14</accession>
<accession>A6NIQ5</accession>
<accession>Q14472</accession>
<accession>Q53T77</accession>
<accession>Q9BZC9</accession>
<accession>Q9BZD0</accession>
<reference key="1">
    <citation type="journal article" date="1992" name="Proc. Natl. Acad. Sci. U.S.A.">
        <title>Primary structure, chromosomal localization, and functional expression of a voltage-gated sodium channel from human brain.</title>
        <authorList>
            <person name="Ahmed C.M."/>
            <person name="Ware D.H."/>
            <person name="Lee S.C."/>
            <person name="Patten C.D."/>
            <person name="Ferrer-Montiel A.V."/>
            <person name="Schinder A.F."/>
            <person name="McPherson J.D."/>
            <person name="Wagner-Mcpherson C.B."/>
            <person name="Wasmuth J.J."/>
            <person name="Evans G.A."/>
            <person name="Montal M."/>
        </authorList>
    </citation>
    <scope>NUCLEOTIDE SEQUENCE [MRNA] (ISOFORM 1)</scope>
    <scope>FUNCTION</scope>
    <scope>TRANSPORTER ACTIVITY</scope>
    <scope>SUBCELLULAR LOCATION</scope>
    <source>
        <tissue>Brain</tissue>
    </source>
</reference>
<reference key="2">
    <citation type="journal article" date="2001" name="Gene">
        <title>Genomic structures of SCN2A and SCN3A -- candidate genes for deafness at the DFNA16 locus.</title>
        <authorList>
            <person name="Kasai N."/>
            <person name="Fukushima K."/>
            <person name="Ueki Y."/>
            <person name="Prasad S."/>
            <person name="Nosakowski J."/>
            <person name="Sugata K."/>
            <person name="Sugata A."/>
            <person name="Nishizaki K."/>
            <person name="Meyer N.C."/>
            <person name="Smith R.J.H."/>
        </authorList>
    </citation>
    <scope>NUCLEOTIDE SEQUENCE [GENOMIC DNA] (ISOFORMS 1 AND 2)</scope>
</reference>
<reference key="3">
    <citation type="journal article" date="2005" name="Nature">
        <title>Generation and annotation of the DNA sequences of human chromosomes 2 and 4.</title>
        <authorList>
            <person name="Hillier L.W."/>
            <person name="Graves T.A."/>
            <person name="Fulton R.S."/>
            <person name="Fulton L.A."/>
            <person name="Pepin K.H."/>
            <person name="Minx P."/>
            <person name="Wagner-McPherson C."/>
            <person name="Layman D."/>
            <person name="Wylie K."/>
            <person name="Sekhon M."/>
            <person name="Becker M.C."/>
            <person name="Fewell G.A."/>
            <person name="Delehaunty K.D."/>
            <person name="Miner T.L."/>
            <person name="Nash W.E."/>
            <person name="Kremitzki C."/>
            <person name="Oddy L."/>
            <person name="Du H."/>
            <person name="Sun H."/>
            <person name="Bradshaw-Cordum H."/>
            <person name="Ali J."/>
            <person name="Carter J."/>
            <person name="Cordes M."/>
            <person name="Harris A."/>
            <person name="Isak A."/>
            <person name="van Brunt A."/>
            <person name="Nguyen C."/>
            <person name="Du F."/>
            <person name="Courtney L."/>
            <person name="Kalicki J."/>
            <person name="Ozersky P."/>
            <person name="Abbott S."/>
            <person name="Armstrong J."/>
            <person name="Belter E.A."/>
            <person name="Caruso L."/>
            <person name="Cedroni M."/>
            <person name="Cotton M."/>
            <person name="Davidson T."/>
            <person name="Desai A."/>
            <person name="Elliott G."/>
            <person name="Erb T."/>
            <person name="Fronick C."/>
            <person name="Gaige T."/>
            <person name="Haakenson W."/>
            <person name="Haglund K."/>
            <person name="Holmes A."/>
            <person name="Harkins R."/>
            <person name="Kim K."/>
            <person name="Kruchowski S.S."/>
            <person name="Strong C.M."/>
            <person name="Grewal N."/>
            <person name="Goyea E."/>
            <person name="Hou S."/>
            <person name="Levy A."/>
            <person name="Martinka S."/>
            <person name="Mead K."/>
            <person name="McLellan M.D."/>
            <person name="Meyer R."/>
            <person name="Randall-Maher J."/>
            <person name="Tomlinson C."/>
            <person name="Dauphin-Kohlberg S."/>
            <person name="Kozlowicz-Reilly A."/>
            <person name="Shah N."/>
            <person name="Swearengen-Shahid S."/>
            <person name="Snider J."/>
            <person name="Strong J.T."/>
            <person name="Thompson J."/>
            <person name="Yoakum M."/>
            <person name="Leonard S."/>
            <person name="Pearman C."/>
            <person name="Trani L."/>
            <person name="Radionenko M."/>
            <person name="Waligorski J.E."/>
            <person name="Wang C."/>
            <person name="Rock S.M."/>
            <person name="Tin-Wollam A.-M."/>
            <person name="Maupin R."/>
            <person name="Latreille P."/>
            <person name="Wendl M.C."/>
            <person name="Yang S.-P."/>
            <person name="Pohl C."/>
            <person name="Wallis J.W."/>
            <person name="Spieth J."/>
            <person name="Bieri T.A."/>
            <person name="Berkowicz N."/>
            <person name="Nelson J.O."/>
            <person name="Osborne J."/>
            <person name="Ding L."/>
            <person name="Meyer R."/>
            <person name="Sabo A."/>
            <person name="Shotland Y."/>
            <person name="Sinha P."/>
            <person name="Wohldmann P.E."/>
            <person name="Cook L.L."/>
            <person name="Hickenbotham M.T."/>
            <person name="Eldred J."/>
            <person name="Williams D."/>
            <person name="Jones T.A."/>
            <person name="She X."/>
            <person name="Ciccarelli F.D."/>
            <person name="Izaurralde E."/>
            <person name="Taylor J."/>
            <person name="Schmutz J."/>
            <person name="Myers R.M."/>
            <person name="Cox D.R."/>
            <person name="Huang X."/>
            <person name="McPherson J.D."/>
            <person name="Mardis E.R."/>
            <person name="Clifton S.W."/>
            <person name="Warren W.C."/>
            <person name="Chinwalla A.T."/>
            <person name="Eddy S.R."/>
            <person name="Marra M.A."/>
            <person name="Ovcharenko I."/>
            <person name="Furey T.S."/>
            <person name="Miller W."/>
            <person name="Eichler E.E."/>
            <person name="Bork P."/>
            <person name="Suyama M."/>
            <person name="Torrents D."/>
            <person name="Waterston R.H."/>
            <person name="Wilson R.K."/>
        </authorList>
    </citation>
    <scope>NUCLEOTIDE SEQUENCE [LARGE SCALE GENOMIC DNA]</scope>
</reference>
<reference key="4">
    <citation type="submission" date="1998-04" db="EMBL/GenBank/DDBJ databases">
        <title>Isolation of the 5'-flanking region for human brain sodium channel subtype II alpha-Subunit (SCN2A).</title>
        <authorList>
            <person name="Lu C.-M."/>
            <person name="Eichelberger J.S."/>
            <person name="Beckman M.L."/>
            <person name="Schade S.D."/>
            <person name="Brown G.B."/>
        </authorList>
    </citation>
    <scope>NUCLEOTIDE SEQUENCE [GENOMIC DNA] OF 1-89</scope>
</reference>
<reference key="5">
    <citation type="journal article" date="1992" name="FEBS Lett.">
        <title>Differential expression of two sodium channel subtypes in human brain.</title>
        <authorList>
            <person name="Lu C.-M."/>
            <person name="Han J."/>
            <person name="Rado T.A."/>
            <person name="Brown G.B."/>
        </authorList>
    </citation>
    <scope>NUCLEOTIDE SEQUENCE [MRNA] OF 1709-1994</scope>
    <source>
        <tissue>Brain</tissue>
    </source>
</reference>
<reference key="6">
    <citation type="journal article" date="1991" name="Proc. Natl. Acad. Sci. U.S.A.">
        <title>Direct amplification of a single dissected chromosomal segment by polymerase chain reaction: a human brain sodium channel gene is on chromosome 2q22-q23.</title>
        <authorList>
            <person name="Han J."/>
            <person name="Lu C.-M."/>
            <person name="Brown G.B."/>
            <person name="Rado T.A."/>
        </authorList>
    </citation>
    <scope>NUCLEOTIDE SEQUENCE [GENOMIC DNA] OF 1702-1772</scope>
</reference>
<reference key="7">
    <citation type="journal article" date="2013" name="Proc. Natl. Acad. Sci. U.S.A.">
        <title>Crystallographic insights into sodium-channel modulation by the beta4 subunit.</title>
        <authorList>
            <person name="Gilchrist J."/>
            <person name="Das S."/>
            <person name="Van Petegem F."/>
            <person name="Bosmans F."/>
        </authorList>
    </citation>
    <scope>INTERACTION WITH SCN4B</scope>
</reference>
<reference key="8">
    <citation type="journal article" date="2014" name="Proc. Natl. Acad. Sci. U.S.A.">
        <title>A disulfide tether stabilizes the block of sodium channels by the conotoxin muO[section sign]-GVIIJ.</title>
        <authorList>
            <person name="Gajewiak J."/>
            <person name="Azam L."/>
            <person name="Imperial J."/>
            <person name="Walewska A."/>
            <person name="Green B.R."/>
            <person name="Bandyopadhyay P.K."/>
            <person name="Raghuraman S."/>
            <person name="Ueberheide B."/>
            <person name="Bern M."/>
            <person name="Zhou H.M."/>
            <person name="Minassian N.A."/>
            <person name="Hagan R.H."/>
            <person name="Flinspach M."/>
            <person name="Liu Y."/>
            <person name="Bulaj G."/>
            <person name="Wickenden A.D."/>
            <person name="Olivera B.M."/>
            <person name="Yoshikami D."/>
            <person name="Zhang M.M."/>
        </authorList>
    </citation>
    <scope>SUBUNIT</scope>
    <scope>INTERACTION WITH THE CONOTOXIN GVIIJ</scope>
</reference>
<reference key="9">
    <citation type="journal article" date="2016" name="Elife">
        <title>Binary architecture of the Nav1.2-beta2 signaling complex.</title>
        <authorList>
            <person name="Das S."/>
            <person name="Gilchrist J."/>
            <person name="Bosmans F."/>
            <person name="Van Petegem F."/>
        </authorList>
    </citation>
    <scope>SUBUNIT</scope>
    <scope>INTERACTION WITH THE SPIDER PROTOXIN-II</scope>
    <scope>DISULFIDE BOND</scope>
</reference>
<reference key="10">
    <citation type="journal article" date="2016" name="J. Neurol.">
        <title>Mutations in the sodium channel gene SCN2A cause neonatal epilepsy with late-onset episodic ataxia.</title>
        <authorList>
            <person name="Schwarz N."/>
            <person name="Hahn A."/>
            <person name="Bast T."/>
            <person name="Mueller S."/>
            <person name="Loeffler H."/>
            <person name="Maljevic S."/>
            <person name="Gaily E."/>
            <person name="Prehl I."/>
            <person name="Biskup S."/>
            <person name="Joensuu T."/>
            <person name="Lehesjoki A.E."/>
            <person name="Neubauer B.A."/>
            <person name="Lerche H."/>
            <person name="Hedrich U.B."/>
        </authorList>
    </citation>
    <scope>INVOLVEMENT IN EA9</scope>
    <scope>VARIANTS EA9 VAL-263; ALA-1522 AND GLY-1882</scope>
    <scope>CHARACTERIZATION OF VARIANTS EA9 ALA-1522 AND GLY-1882</scope>
</reference>
<reference key="11">
    <citation type="journal article" date="2017" name="Sci. Rep.">
        <title>The tarantula toxin beta/delta-TRTX-Pre1a highlights the importance of the S1-S2 voltage-sensor region for sodium channel subtype selectivity.</title>
        <authorList>
            <person name="Wingerd J.S."/>
            <person name="Mozar C.A."/>
            <person name="Ussing C.A."/>
            <person name="Murali S.S."/>
            <person name="Chin Y.K."/>
            <person name="Cristofori-Armstrong B."/>
            <person name="Durek T."/>
            <person name="Gilchrist J."/>
            <person name="Vaughan C.W."/>
            <person name="Bosmans F."/>
            <person name="Adams D.J."/>
            <person name="Lewis R.J."/>
            <person name="Alewood P.F."/>
            <person name="Mobli M."/>
            <person name="Christie M.J."/>
            <person name="Rash L.D."/>
        </authorList>
    </citation>
    <scope>SUBUNIT</scope>
    <scope>INTERACTION WITH THE SPIDER BETA/DELTA-THERAPHOTOXIN-PRE1A</scope>
</reference>
<reference key="12">
    <citation type="journal article" date="2023" name="Nat. Commun.">
        <title>Pain-causing stinging nettle toxins target TMEM233 to modulate NaV1.7 function.</title>
        <authorList>
            <person name="Jami S."/>
            <person name="Deuis J.R."/>
            <person name="Klasfauseweh T."/>
            <person name="Cheng X."/>
            <person name="Kurdyukov S."/>
            <person name="Chung F."/>
            <person name="Okorokov A.L."/>
            <person name="Li S."/>
            <person name="Zhang J."/>
            <person name="Cristofori-Armstrong B."/>
            <person name="Israel M.R."/>
            <person name="Ju R.J."/>
            <person name="Robinson S.D."/>
            <person name="Zhao P."/>
            <person name="Ragnarsson L."/>
            <person name="Andersson A."/>
            <person name="Tran P."/>
            <person name="Schendel V."/>
            <person name="McMahon K.L."/>
            <person name="Tran H.N.T."/>
            <person name="Chin Y.K."/>
            <person name="Zhu Y."/>
            <person name="Liu J."/>
            <person name="Crawford T."/>
            <person name="Purushothamvasan S."/>
            <person name="Habib A.M."/>
            <person name="Andersson D.A."/>
            <person name="Rash L.D."/>
            <person name="Wood J.N."/>
            <person name="Zhao J."/>
            <person name="Stehbens S.J."/>
            <person name="Mobli M."/>
            <person name="Leffler A."/>
            <person name="Jiang D."/>
            <person name="Cox J.J."/>
            <person name="Waxman S.G."/>
            <person name="Dib-Hajj S.D."/>
            <person name="Gregory Neely G."/>
            <person name="Durek T."/>
            <person name="Vetter I."/>
        </authorList>
    </citation>
    <scope>SUBUNIT</scope>
</reference>
<reference key="13">
    <citation type="journal article" date="2019" name="Science">
        <title>Molecular basis for pore blockade of human Na+ channel Nav1.2 by the mu-conotoxin KIIIA.</title>
        <authorList>
            <person name="Pan X."/>
            <person name="Li Z."/>
            <person name="Huang X."/>
            <person name="Huang G."/>
            <person name="Gao S."/>
            <person name="Shen H."/>
            <person name="Liu L."/>
            <person name="Lei J."/>
            <person name="Yan N."/>
        </authorList>
    </citation>
    <scope>STRUCTURE BY ELECTRON MICROSCOPY (3.0 ANGSTROMS) IN COMPLEX WITH SCN2B AND MU-CONOTOXIN KIIIA</scope>
    <scope>SUBUNIT</scope>
    <scope>DISULFIDE BOND</scope>
    <scope>GLYCOSYLATION AT ASN-340; ASN-1368; ASN-1382 AND ASN-1393</scope>
</reference>
<reference key="14">
    <citation type="journal article" date="2001" name="Epilepsy Res.">
        <title>The voltage-gated sodium channel gene SCN2A and idiopathic generalized epilepsy.</title>
        <authorList>
            <person name="Haug K."/>
            <person name="Hallmann K."/>
            <person name="Rebstock J."/>
            <person name="Dullinger J."/>
            <person name="Muth S."/>
            <person name="Haverkamp F."/>
            <person name="Pfeiffer H."/>
            <person name="Rau B."/>
            <person name="Elger C.E."/>
            <person name="Propping P."/>
            <person name="Heils A."/>
        </authorList>
    </citation>
    <scope>VARIANT HIS-1918</scope>
</reference>
<reference key="15">
    <citation type="journal article" date="2001" name="Proc. Natl. Acad. Sci. U.S.A.">
        <title>A missense mutation of the Na+ channel alpha II subunit gene Na(v)1.2 in a patient with febrile and afebrile seizures causes channel dysfunction.</title>
        <authorList>
            <person name="Sugawara T."/>
            <person name="Tsurubuchi Y."/>
            <person name="Agarwala K.L."/>
            <person name="Ito M."/>
            <person name="Fukuma G."/>
            <person name="Mazaki-Miyazaki E."/>
            <person name="Nagafuji H."/>
            <person name="Noda M."/>
            <person name="Imoto K."/>
            <person name="Wada K."/>
            <person name="Mitsudome A."/>
            <person name="Kaneko S."/>
            <person name="Montal M."/>
            <person name="Nagata K."/>
            <person name="Hirose S."/>
            <person name="Yamakawa K."/>
        </authorList>
    </citation>
    <scope>VARIANT BFIS3 TRP-188</scope>
    <scope>CHARACTERIZATION OF VARIANT BFIS3 TRP-188</scope>
    <scope>VARIANTS LYS-19 AND GLN-524</scope>
</reference>
<reference key="16">
    <citation type="journal article" date="2001" name="Proc. Natl. Acad. Sci. U.S.A.">
        <authorList>
            <person name="Sugawara T."/>
            <person name="Tsurubuchi Y."/>
            <person name="Agarwala K.L."/>
            <person name="Ito M."/>
            <person name="Fukuma G."/>
            <person name="Mazaki-Miyazaki E."/>
            <person name="Nagafuji H."/>
            <person name="Noda M."/>
            <person name="Imoto K."/>
            <person name="Wada K."/>
            <person name="Mitsudome A."/>
            <person name="Kaneko S."/>
            <person name="Montal M."/>
            <person name="Nagata K."/>
            <person name="Hirose S."/>
            <person name="Yamakawa K."/>
        </authorList>
    </citation>
    <scope>ERRATUM OF PUBMED:11371648</scope>
</reference>
<reference key="17">
    <citation type="journal article" date="2002" name="Lancet">
        <title>Sodium-channel defects in benign familial neonatal-infantile seizures.</title>
        <authorList>
            <person name="Heron S.E."/>
            <person name="Crossland K.M."/>
            <person name="Andermann E."/>
            <person name="Phillips H.A."/>
            <person name="Hall A.J."/>
            <person name="Bleasel A."/>
            <person name="Shevell M."/>
            <person name="Mercho S."/>
            <person name="Seni M.H."/>
            <person name="Guiot M.C."/>
            <person name="Mulley J.C."/>
            <person name="Berkovic S.F."/>
            <person name="Scheffer I.E."/>
        </authorList>
    </citation>
    <scope>VARIANTS BFIS3 PHE-1330 AND VAL-1563</scope>
</reference>
<reference key="18">
    <citation type="journal article" date="2002" name="Lancet">
        <authorList>
            <person name="Heron S.E."/>
            <person name="Crossland K.M."/>
            <person name="Andermann E."/>
            <person name="Phillips H.A."/>
            <person name="Hall A.J."/>
            <person name="Bleasel A."/>
            <person name="Shevell M."/>
            <person name="Mercho S."/>
            <person name="Seni M.H."/>
            <person name="Guiot M.C."/>
            <person name="Mulley J.C."/>
            <person name="Berkovic S.F."/>
            <person name="Scheffer I.E."/>
        </authorList>
    </citation>
    <scope>ERRATUM OF PUBMED:12243921</scope>
</reference>
<reference key="19">
    <citation type="journal article" date="2003" name="Mol. Psychiatry">
        <title>Sodium channels SCN1A, SCN2A and SCN3A in familial autism.</title>
        <authorList>
            <person name="Weiss L.A."/>
            <person name="Escayg A."/>
            <person name="Kearney J.A."/>
            <person name="Trudeau M."/>
            <person name="MacDonald B.T."/>
            <person name="Mori M."/>
            <person name="Reichert J."/>
            <person name="Buxbaum J.D."/>
            <person name="Meisler M.H."/>
        </authorList>
    </citation>
    <scope>VARIANTS LYS-19 AND THR-1902</scope>
</reference>
<reference key="20">
    <citation type="journal article" date="2004" name="Ann. Neurol.">
        <title>Benign familial neonatal-infantile seizures: characterization of a new sodium channelopathy.</title>
        <authorList>
            <person name="Berkovic S.F."/>
            <person name="Heron S.E."/>
            <person name="Giordano L."/>
            <person name="Marini C."/>
            <person name="Guerrini R."/>
            <person name="Kaplan R.E."/>
            <person name="Gambardella A."/>
            <person name="Steinlein O.K."/>
            <person name="Grinton B.E."/>
            <person name="Dean J.T."/>
            <person name="Bordo L."/>
            <person name="Hodgson B.L."/>
            <person name="Yamamoto T."/>
            <person name="Mulley J.C."/>
            <person name="Zara F."/>
            <person name="Scheffer I.E."/>
        </authorList>
    </citation>
    <scope>VARIANTS BFIS3 GLN-223; ILE-892; ILE-1003 AND GLN-1319</scope>
</reference>
<reference key="21">
    <citation type="journal article" date="2004" name="J. Neurosci.">
        <title>A nonsense mutation of the sodium channel gene SCN2A in a patient with intractable epilepsy and mental decline.</title>
        <authorList>
            <person name="Kamiya K."/>
            <person name="Kaneda M."/>
            <person name="Sugawara T."/>
            <person name="Mazaki E."/>
            <person name="Okamura N."/>
            <person name="Montal M."/>
            <person name="Makita N."/>
            <person name="Tanaka M."/>
            <person name="Fukushima K."/>
            <person name="Fujiwara T."/>
            <person name="Inoue Y."/>
            <person name="Yamakawa K."/>
        </authorList>
    </citation>
    <scope>VARIANT 102-ARG--LYS-2005 DEL</scope>
    <scope>CHARACTERIZATION OF VARIANT 102-ARG--LYS-2005 DEL</scope>
</reference>
<reference key="22">
    <citation type="journal article" date="2005" name="Brain Dev.">
        <title>A missense mutation in SCN1A in brothers with severe myoclonic epilepsy in infancy (SMEI) inherited from a father with febrile seizures.</title>
        <authorList>
            <person name="Kimura K."/>
            <person name="Sugawara T."/>
            <person name="Mazaki-Miyazaki E."/>
            <person name="Hoshino K."/>
            <person name="Nomura Y."/>
            <person name="Tateno A."/>
            <person name="Hachimori K."/>
            <person name="Yamakawa K."/>
            <person name="Segawa M."/>
        </authorList>
    </citation>
    <scope>VARIANT VAL-328</scope>
</reference>
<reference key="23">
    <citation type="journal article" date="2006" name="Epilepsia">
        <title>A novel SCN2A mutation in family with benign familial infantile seizures.</title>
        <authorList>
            <person name="Striano P."/>
            <person name="Bordo L."/>
            <person name="Lispi M.L."/>
            <person name="Specchio N."/>
            <person name="Minetti C."/>
            <person name="Vigevano F."/>
            <person name="Zara F."/>
        </authorList>
    </citation>
    <scope>VARIANT BFIS3 LYS-1001</scope>
</reference>
<reference key="24">
    <citation type="journal article" date="2006" name="J. Neurosci.">
        <title>Effects in neocortical neurons of mutations of the Na(v)1.2 Na+ channel causing benign familial neonatal-infantile seizures.</title>
        <authorList>
            <person name="Scalmani P."/>
            <person name="Rusconi R."/>
            <person name="Armatura E."/>
            <person name="Zara F."/>
            <person name="Avanzini G."/>
            <person name="Franceschetti S."/>
            <person name="Mantegazza M."/>
        </authorList>
    </citation>
    <scope>CHARACTERIZATION OF VARIANTS BFIS3 GLN-223; GLN-1319; PHE-1330 AND VAL-1563</scope>
    <scope>FUNCTION</scope>
    <scope>TRANSPORTER ACTIVITY</scope>
    <scope>SUBCELLULAR LOCATION</scope>
</reference>
<reference key="25">
    <citation type="journal article" date="2007" name="Epilepsia">
        <title>SCN2A mutations and benign familial neonatal-infantile seizures: the phenotypic spectrum.</title>
        <authorList>
            <person name="Herlenius E."/>
            <person name="Heron S.E."/>
            <person name="Grinton B.E."/>
            <person name="Keay D."/>
            <person name="Scheffer I.E."/>
            <person name="Mulley J.C."/>
            <person name="Berkovic S.F."/>
        </authorList>
    </citation>
    <scope>VARIANTS BFIS3 GLN-430 AND SER-1596</scope>
</reference>
<reference key="26">
    <citation type="journal article" date="2008" name="Epilepsia">
        <title>Impaired NaV1.2 function and reduced cell surface expression in benign familial neonatal-infantile seizures.</title>
        <authorList>
            <person name="Misra S.N."/>
            <person name="Kahlig K.M."/>
            <person name="George A.L. Jr."/>
        </authorList>
    </citation>
    <scope>CHARACTERIZATION OF VARIANTS BFIS3 GLN-1319; PHE-1330 AND VAL-1563</scope>
</reference>
<reference key="27">
    <citation type="journal article" date="2009" name="Brain Dev.">
        <title>Missense mutation of the sodium channel gene SCN2A causes Dravet syndrome.</title>
        <authorList>
            <person name="Shi X."/>
            <person name="Yasumoto S."/>
            <person name="Nakagawa E."/>
            <person name="Fukasawa T."/>
            <person name="Uchiya S."/>
            <person name="Hirose S."/>
        </authorList>
    </citation>
    <scope>VARIANTS ASN-322 AND VAL-328</scope>
    <scope>VARIANT DEE11 THR-1312</scope>
</reference>
<reference key="28">
    <citation type="journal article" date="2009" name="Neurology">
        <title>De novo mutations of voltage-gated sodium channel alphaII gene SCN2A in intractable epilepsies.</title>
        <authorList>
            <person name="Ogiwara I."/>
            <person name="Ito K."/>
            <person name="Sawaishi Y."/>
            <person name="Osaka H."/>
            <person name="Mazaki E."/>
            <person name="Inoue I."/>
            <person name="Montal M."/>
            <person name="Hashikawa T."/>
            <person name="Shike T."/>
            <person name="Fujiwara T."/>
            <person name="Inoue Y."/>
            <person name="Kaneda M."/>
            <person name="Yamakawa K."/>
        </authorList>
    </citation>
    <scope>VARIANTS DEE11 LYS-1211 AND MET-1473</scope>
    <scope>VARIANTS LYS-19; VAL-328; GLN-524 AND VAL-575</scope>
    <scope>CHARACTERIZATION OF VARIANTS DEE11 LYS-1211 AND MET-1473</scope>
    <scope>CHARACTERIZATION OF VARIANT VAL-575</scope>
</reference>
<reference key="29">
    <citation type="journal article" date="2010" name="Brain">
        <title>Molecular correlates of age-dependent seizures in an inherited neonatal-infantile epilepsy.</title>
        <authorList>
            <person name="Liao Y."/>
            <person name="Deprez L."/>
            <person name="Maljevic S."/>
            <person name="Pitsch J."/>
            <person name="Claes L."/>
            <person name="Hristova D."/>
            <person name="Jordanova A."/>
            <person name="Ala-Mello S."/>
            <person name="Bellan-Koch A."/>
            <person name="Blazevic D."/>
            <person name="Schubert S."/>
            <person name="Thomas E.A."/>
            <person name="Petrou S."/>
            <person name="Becker A.J."/>
            <person name="De Jonghe P."/>
            <person name="Lerche H."/>
        </authorList>
    </citation>
    <scope>VARIANTS BFIS3 VAL-252 AND MET-261</scope>
    <scope>CHARACTERIZATION OF VARIANTS BFIS3 VAL-252 AND MET-261</scope>
</reference>
<reference key="30">
    <citation type="journal article" date="2010" name="Neurology">
        <title>SCN2A mutation associated with neonatal epilepsy, late-onset episodic ataxia, myoclonus, and pain.</title>
        <authorList>
            <person name="Liao Y."/>
            <person name="Anttonen A.K."/>
            <person name="Liukkonen E."/>
            <person name="Gaily E."/>
            <person name="Maljevic S."/>
            <person name="Schubert S."/>
            <person name="Bellan-Koch A."/>
            <person name="Petrou S."/>
            <person name="Ahonen V.E."/>
            <person name="Lerche H."/>
            <person name="Lehesjoki A.E."/>
        </authorList>
    </citation>
    <scope>VARIANT DEE11 VAL-263</scope>
    <scope>CHARACTERIZATION OF VARIANT DEE11 VAL-263</scope>
</reference>
<reference key="31">
    <citation type="journal article" date="2012" name="Epilepsia">
        <title>Targeted next generation sequencing as a diagnostic tool in epileptic disorders.</title>
        <authorList>
            <person name="Lemke J.R."/>
            <person name="Riesch E."/>
            <person name="Scheurenbrand T."/>
            <person name="Schubach M."/>
            <person name="Wilhelm C."/>
            <person name="Steiner I."/>
            <person name="Hansen J."/>
            <person name="Courage C."/>
            <person name="Gallati S."/>
            <person name="Buerki S."/>
            <person name="Strozzi S."/>
            <person name="Simonetti B.G."/>
            <person name="Grunt S."/>
            <person name="Steinlin M."/>
            <person name="Alber M."/>
            <person name="Wolff M."/>
            <person name="Klopstock T."/>
            <person name="Prott E.C."/>
            <person name="Lorenz R."/>
            <person name="Spaich C."/>
            <person name="Rona S."/>
            <person name="Lakshminarasimhan M."/>
            <person name="Kroell J."/>
            <person name="Dorn T."/>
            <person name="Kraemer G."/>
            <person name="Synofzik M."/>
            <person name="Becker F."/>
            <person name="Weber Y.G."/>
            <person name="Lerche H."/>
            <person name="Boehm D."/>
            <person name="Biskup S."/>
        </authorList>
    </citation>
    <scope>VARIANT BFIS3 GLU-208</scope>
</reference>
<reference key="32">
    <citation type="journal article" date="2012" name="Epilepsy Res.">
        <title>Acute encephalopathy with a novel point mutation in the SCN2A gene.</title>
        <authorList>
            <person name="Kobayashi K."/>
            <person name="Ohzono H."/>
            <person name="Shinohara M."/>
            <person name="Saitoh M."/>
            <person name="Ohmori I."/>
            <person name="Ohtsuka Y."/>
            <person name="Mizuguchi M."/>
        </authorList>
    </citation>
    <scope>VARIANT THR-1128</scope>
</reference>
<reference key="33">
    <citation type="journal article" date="2012" name="Epilepsy Res.">
        <title>Prevalence of SCN1A mutations in children with suspected Dravet syndrome and intractable childhood epilepsy.</title>
        <authorList>
            <person name="Wang J.W."/>
            <person name="Shi X.Y."/>
            <person name="Kurahashi H."/>
            <person name="Hwang S.K."/>
            <person name="Ishii A."/>
            <person name="Higurashi N."/>
            <person name="Kaneko S."/>
            <person name="Hirose S."/>
        </authorList>
    </citation>
    <scope>VARIANTS LYS-19; ASN-322; VAL-328 AND ASN-649</scope>
    <scope>VARIANT DEE11 THR-1312</scope>
</reference>
<reference key="34">
    <citation type="journal article" date="2012" name="Neurobiol. Dis.">
        <title>Compromised function in the Na(v)1.2 Dravet syndrome mutation R1312T.</title>
        <authorList>
            <person name="Lossin C."/>
            <person name="Shi X."/>
            <person name="Rogawski M.A."/>
            <person name="Hirose S."/>
        </authorList>
    </citation>
    <scope>CHARACTERIZATION OF VARIANT DEE11 THR-1312</scope>
</reference>
<reference key="35">
    <citation type="journal article" date="2012" name="N. Engl. J. Med.">
        <title>Diagnostic exome sequencing in persons with severe intellectual disability.</title>
        <authorList>
            <person name="de Ligt J."/>
            <person name="Willemsen M.H."/>
            <person name="van Bon B.W."/>
            <person name="Kleefstra T."/>
            <person name="Yntema H.G."/>
            <person name="Kroes T."/>
            <person name="Vulto-van Silfhout A.T."/>
            <person name="Koolen D.A."/>
            <person name="de Vries P."/>
            <person name="Gilissen C."/>
            <person name="del Rosario M."/>
            <person name="Hoischen A."/>
            <person name="Scheffer H."/>
            <person name="de Vries B.B."/>
            <person name="Brunner H.G."/>
            <person name="Veltman J.A."/>
            <person name="Vissers L.E."/>
        </authorList>
    </citation>
    <scope>VARIANT DEE11 1398-TRP--LYS-2005 DEL</scope>
</reference>
<reference key="36">
    <citation type="journal article" date="2013" name="Epilepsia">
        <title>Whole genome sequencing identifies SCN2A mutation in monozygotic twins with Ohtahara syndrome and unique neuropathologic findings.</title>
        <authorList>
            <person name="Touma M."/>
            <person name="Joshi M."/>
            <person name="Connolly M.C."/>
            <person name="Grant P.E."/>
            <person name="Hansen A.R."/>
            <person name="Khwaja O."/>
            <person name="Berry G.T."/>
            <person name="Kinney H.C."/>
            <person name="Poduri A."/>
            <person name="Agrawal P.B."/>
        </authorList>
    </citation>
    <scope>VARIANT DEE11 VAL-263</scope>
</reference>
<reference key="37">
    <citation type="journal article" date="2013" name="Epilepsia">
        <title>An SCN2A mutation in a family with infantile seizures from Madagascar reveals an increased subthreshold Na(+) current.</title>
        <authorList>
            <person name="Lauxmann S."/>
            <person name="Boutry-Kryza N."/>
            <person name="Rivier C."/>
            <person name="Mueller S."/>
            <person name="Hedrich U.B."/>
            <person name="Maljevic S."/>
            <person name="Szepetowski P."/>
            <person name="Lerche H."/>
            <person name="Lesca G."/>
        </authorList>
    </citation>
    <scope>VARIANT BFIS3 CYS-1589</scope>
    <scope>CHARACTERIZATION OF VARIANT BFIS3 CYS-1589</scope>
</reference>
<reference key="38">
    <citation type="journal article" date="2013" name="Epilepsia">
        <title>Genetic testing in benign familial epilepsies of the first year of life: clinical and diagnostic significance.</title>
        <authorList>
            <person name="Zara F."/>
            <person name="Specchio N."/>
            <person name="Striano P."/>
            <person name="Robbiano A."/>
            <person name="Gennaro E."/>
            <person name="Paravidino R."/>
            <person name="Vanni N."/>
            <person name="Beccaria F."/>
            <person name="Capovilla G."/>
            <person name="Bianchi A."/>
            <person name="Caffi L."/>
            <person name="Cardilli V."/>
            <person name="Darra F."/>
            <person name="Bernardina B.D."/>
            <person name="Fusco L."/>
            <person name="Gaggero R."/>
            <person name="Giordano L."/>
            <person name="Guerrini R."/>
            <person name="Incorpora G."/>
            <person name="Mastrangelo M."/>
            <person name="Spaccini L."/>
            <person name="Laverda A.M."/>
            <person name="Vecchi M."/>
            <person name="Vanadia F."/>
            <person name="Veggiotti P."/>
            <person name="Viri M."/>
            <person name="Occhi G."/>
            <person name="Budetta M."/>
            <person name="Taglialatela M."/>
            <person name="Coviello D.A."/>
            <person name="Vigevano F."/>
            <person name="Minetti C."/>
        </authorList>
    </citation>
    <scope>VARIANTS BFIS3 GLN-223; LYS-1001; GLN-1319 AND ASN-1641</scope>
</reference>
<reference key="39">
    <citation type="journal article" date="2013" name="Epilepsia">
        <title>Targeted capture and sequencing for detection of mutations causing early onset epileptic encephalopathy.</title>
        <authorList>
            <person name="Kodera H."/>
            <person name="Kato M."/>
            <person name="Nord A.S."/>
            <person name="Walsh T."/>
            <person name="Lee M."/>
            <person name="Yamanaka G."/>
            <person name="Tohyama J."/>
            <person name="Nakamura K."/>
            <person name="Nakagawa E."/>
            <person name="Ikeda T."/>
            <person name="Ben-Zeev B."/>
            <person name="Lev D."/>
            <person name="Lerman-Sagie T."/>
            <person name="Straussberg R."/>
            <person name="Tanabe S."/>
            <person name="Ueda K."/>
            <person name="Amamoto M."/>
            <person name="Ohta S."/>
            <person name="Nonoda Y."/>
            <person name="Nishiyama K."/>
            <person name="Tsurusaki Y."/>
            <person name="Nakashima M."/>
            <person name="Miyake N."/>
            <person name="Hayasaka K."/>
            <person name="King M.C."/>
            <person name="Matsumoto N."/>
            <person name="Saitsu H."/>
        </authorList>
    </citation>
    <scope>VARIANT DEE11 ASP-211</scope>
</reference>
<reference key="40">
    <citation type="journal article" date="2013" name="Nat. Genet.">
        <title>Targeted resequencing in epileptic encephalopathies identifies de novo mutations in CHD2 and SYNGAP1.</title>
        <authorList>
            <person name="Carvill G.L."/>
            <person name="Heavin S.B."/>
            <person name="Yendle S.C."/>
            <person name="McMahon J.M."/>
            <person name="O'Roak B.J."/>
            <person name="Cook J."/>
            <person name="Khan A."/>
            <person name="Dorschner M.O."/>
            <person name="Weaver M."/>
            <person name="Calvert S."/>
            <person name="Malone S."/>
            <person name="Wallace G."/>
            <person name="Stanley T."/>
            <person name="Bye A.M."/>
            <person name="Bleasel A."/>
            <person name="Howell K.B."/>
            <person name="Kivity S."/>
            <person name="Mackay M.T."/>
            <person name="Rodriguez-Casero V."/>
            <person name="Webster R."/>
            <person name="Korczyn A."/>
            <person name="Afawi Z."/>
            <person name="Zelnick N."/>
            <person name="Lerman-Sagie T."/>
            <person name="Lev D."/>
            <person name="Moeller R.S."/>
            <person name="Gill D."/>
            <person name="Andrade D.M."/>
            <person name="Freeman J.L."/>
            <person name="Sadleir L.G."/>
            <person name="Shendure J."/>
            <person name="Berkovic S.F."/>
            <person name="Scheffer I.E."/>
            <person name="Mefford H.C."/>
        </authorList>
    </citation>
    <scope>VARIANTS DEE11 ILE-136; ASN-905; CYS-928 AND GLN-1882</scope>
</reference>
<reference key="41">
    <citation type="journal article" date="2013" name="Neurology">
        <title>Clinical spectrum of SCN2A mutations expanding to Ohtahara syndrome.</title>
        <authorList>
            <person name="Nakamura K."/>
            <person name="Kato M."/>
            <person name="Osaka H."/>
            <person name="Yamashita S."/>
            <person name="Nakagawa E."/>
            <person name="Haginoya K."/>
            <person name="Tohyama J."/>
            <person name="Okuda M."/>
            <person name="Wada T."/>
            <person name="Shimakawa S."/>
            <person name="Imai K."/>
            <person name="Takeshita S."/>
            <person name="Ishiwata H."/>
            <person name="Lev D."/>
            <person name="Lerman-Sagie T."/>
            <person name="Cervantes-Barragan D.E."/>
            <person name="Villarroel C.E."/>
            <person name="Ohfu M."/>
            <person name="Writzl K."/>
            <person name="Gnidovec Strazisar B."/>
            <person name="Hirabayashi S."/>
            <person name="Chitayat D."/>
            <person name="Myles Reid D."/>
            <person name="Nishiyama K."/>
            <person name="Kodera H."/>
            <person name="Nakashima M."/>
            <person name="Tsurusaki Y."/>
            <person name="Miyake N."/>
            <person name="Hayasaka K."/>
            <person name="Matsumoto N."/>
            <person name="Saitsu H."/>
        </authorList>
    </citation>
    <scope>VARIANTS DEE11 GLY-169; ASP-212; ASP-213; SER-236; THR-263; GLN-853; THR-876; LYS-999; VAL-1323; LEU-1326; TYR-1336; THR-1338; ASN-1623 AND LEU-1629</scope>
</reference>
<reference key="42">
    <citation type="journal article" date="2013" name="Pediatr. Neurol.">
        <title>SCN2A mutation is associated with infantile spasms and bitemporal glucose hypometabolism.</title>
        <authorList>
            <person name="Sundaram S.K."/>
            <person name="Chugani H.T."/>
            <person name="Tiwari V.N."/>
            <person name="Huq A.H."/>
        </authorList>
    </citation>
    <scope>VARIANT GLU-1422</scope>
</reference>
<reference key="43">
    <citation type="journal article" date="2013" name="Pediatr. Neurol.">
        <title>Novel de novo SCN2A mutation in a child with migrating focal seizures of infancy.</title>
        <authorList>
            <person name="Dhamija R."/>
            <person name="Wirrell E."/>
            <person name="Falcao G."/>
            <person name="Kirmani S."/>
            <person name="Wong-Kisiel L.C."/>
        </authorList>
    </citation>
    <scope>VARIANT DEE11 ASP-1326</scope>
</reference>
<reference key="44">
    <citation type="journal article" date="2014" name="Epilepsia">
        <title>Exome sequencing identifies a de novo SCN2A mutation in a patient with intractable seizures, severe intellectual disability, optic atrophy, muscular hypotonia, and brain abnormalities.</title>
        <authorList>
            <person name="Baasch A.L."/>
            <person name="Huening I."/>
            <person name="Gilissen C."/>
            <person name="Klepper J."/>
            <person name="Veltman J.A."/>
            <person name="Gillessen-Kaesbach G."/>
            <person name="Hoischen A."/>
            <person name="Lohmann K."/>
        </authorList>
    </citation>
    <scope>VARIANT DEE11 LEU-1882</scope>
</reference>
<reference key="45">
    <citation type="journal article" date="2014" name="Epileptic Disord.">
        <title>Confirming an expanded spectrum of SCN2A mutations: a case series.</title>
        <authorList>
            <person name="Matalon D."/>
            <person name="Goldberg E."/>
            <person name="Medne L."/>
            <person name="Marsh E.D."/>
        </authorList>
    </citation>
    <scope>VARIANTS DEE11 LYS-132; GLY-430 AND PRO-1342</scope>
</reference>
<reference key="46">
    <citation type="journal article" date="2014" name="Hum. Mol. Genet.">
        <title>Clinical whole-genome sequencing in severe early-onset epilepsy reveals new genes and improves molecular diagnosis.</title>
        <authorList>
            <consortium name="WGS500 Consortium"/>
            <person name="Martin H.C."/>
            <person name="Kim G.E."/>
            <person name="Pagnamenta A.T."/>
            <person name="Murakami Y."/>
            <person name="Carvill G.L."/>
            <person name="Meyer E."/>
            <person name="Copley R.R."/>
            <person name="Rimmer A."/>
            <person name="Barcia G."/>
            <person name="Fleming M.R."/>
            <person name="Kronengold J."/>
            <person name="Brown M.R."/>
            <person name="Hudspith K.A."/>
            <person name="Broxholme J."/>
            <person name="Kanapin A."/>
            <person name="Cazier J.B."/>
            <person name="Kinoshita T."/>
            <person name="Nabbout R."/>
            <person name="Bentley D."/>
            <person name="McVean G."/>
            <person name="Heavin S."/>
            <person name="Zaiwalla Z."/>
            <person name="McShane T."/>
            <person name="Mefford H.C."/>
            <person name="Shears D."/>
            <person name="Stewart H."/>
            <person name="Kurian M.A."/>
            <person name="Scheffer I.E."/>
            <person name="Blair E."/>
            <person name="Donnelly P."/>
            <person name="Kaczmarek L.K."/>
            <person name="Taylor J.C."/>
        </authorList>
    </citation>
    <scope>VARIANT DEE11 ARG-1853</scope>
</reference>
<reference key="47">
    <citation type="journal article" date="2014" name="Neuropediatrics">
        <title>Infantile epileptic encephalopathy, transient choreoathetotic movements, and hypersomnia due to a De Novo missense mutation in the SCN2A gene.</title>
        <authorList>
            <person name="Hackenberg A."/>
            <person name="Baumer A."/>
            <person name="Sticht H."/>
            <person name="Schmitt B."/>
            <person name="Kroell-Seger J."/>
            <person name="Wille D."/>
            <person name="Joset P."/>
            <person name="Papuc S."/>
            <person name="Rauch A."/>
            <person name="Plecko B."/>
        </authorList>
    </citation>
    <scope>VARIANT DEE11 PRO-1342</scope>
</reference>
<reference key="48">
    <citation type="journal article" date="2015" name="Acta Neurol. Belg.">
        <title>De novo R853Q mutation of SCN2A gene and West syndrome.</title>
        <authorList>
            <person name="Samanta D."/>
            <person name="Ramakrishnaiah R."/>
        </authorList>
    </citation>
    <scope>VARIANT DEE11 GLN-853</scope>
</reference>
<reference key="49">
    <citation type="journal article" date="2015" name="Brain Dev.">
        <title>A case of recurrent encephalopathy with SCN2A missense mutation.</title>
        <authorList>
            <person name="Fukasawa T."/>
            <person name="Kubota T."/>
            <person name="Negoro T."/>
            <person name="Saitoh M."/>
            <person name="Mizuguchi M."/>
            <person name="Ihara Y."/>
            <person name="Ishii A."/>
            <person name="Hirose S."/>
        </authorList>
    </citation>
    <scope>VARIANT DEE11 TRP-1660</scope>
</reference>
<reference key="50">
    <citation type="journal article" date="2015" name="Brain Dev.">
        <title>SCN2A mutation in a Chinese boy with infantile spasm - response to Modified Atkins Diet.</title>
        <authorList>
            <person name="Wong V.C."/>
            <person name="Fung C.W."/>
            <person name="Kwong A.K."/>
        </authorList>
    </citation>
    <scope>VARIANT DEE11 LYS-1211</scope>
</reference>
<reference key="51">
    <citation type="journal article" date="2015" name="Epilepsia">
        <title>Diagnostic yield of genetic testing in epileptic encephalopathy in childhood.</title>
        <authorList>
            <person name="Mercimek-Mahmutoglu S."/>
            <person name="Patel J."/>
            <person name="Cordeiro D."/>
            <person name="Hewson S."/>
            <person name="Callen D."/>
            <person name="Donner E.J."/>
            <person name="Hahn C.D."/>
            <person name="Kannu P."/>
            <person name="Kobayashi J."/>
            <person name="Minassian B.A."/>
            <person name="Moharir M."/>
            <person name="Siriwardena K."/>
            <person name="Weiss S.K."/>
            <person name="Weksberg R."/>
            <person name="Snead O.C. III"/>
        </authorList>
    </citation>
    <scope>VARIANTS DEE11 GLY-220 AND ALA-1522</scope>
</reference>
<reference key="52">
    <citation type="journal article" date="2015" name="Epilepsia">
        <title>Familial neonatal seizures in 36 families: Clinical and genetic features correlate with outcome.</title>
        <authorList>
            <person name="Grinton B.E."/>
            <person name="Heron S.E."/>
            <person name="Pelekanos J.T."/>
            <person name="Zuberi S.M."/>
            <person name="Kivity S."/>
            <person name="Afawi Z."/>
            <person name="Williams T.C."/>
            <person name="Casalaz D.M."/>
            <person name="Yendle S."/>
            <person name="Linder I."/>
            <person name="Lev D."/>
            <person name="Lerman-Sagie T."/>
            <person name="Malone S."/>
            <person name="Bassan H."/>
            <person name="Goldberg-Stern H."/>
            <person name="Stanley T."/>
            <person name="Hayman M."/>
            <person name="Calvert S."/>
            <person name="Korczyn A.D."/>
            <person name="Shevell M."/>
            <person name="Scheffer I.E."/>
            <person name="Mulley J.C."/>
            <person name="Berkovic S.F."/>
        </authorList>
    </citation>
    <scope>VARIANTS BFIS3 LYS-1321 AND LYS-1531</scope>
</reference>
<reference key="53">
    <citation type="journal article" date="2015" name="Epilepsy Res.">
        <title>Missense mutations in sodium channel SCN1A and SCN2A predispose children to encephalopathy with severe febrile seizures.</title>
        <authorList>
            <person name="Saitoh M."/>
            <person name="Ishii A."/>
            <person name="Ihara Y."/>
            <person name="Hoshino A."/>
            <person name="Terashima H."/>
            <person name="Kubota M."/>
            <person name="Kikuchi K."/>
            <person name="Yamanaka G."/>
            <person name="Amemiya K."/>
            <person name="Hirose S."/>
            <person name="Mizuguchi M."/>
        </authorList>
    </citation>
    <scope>VARIANTS VAL-172 AND VAL-328</scope>
</reference>
<reference key="54">
    <citation type="journal article" date="2015" name="Mol. Autism">
        <title>Integrated analysis of whole-exome sequencing and transcriptome profiling in males with autism spectrum disorders.</title>
        <authorList>
            <person name="Codina-Sola M."/>
            <person name="Rodriguez-Santiago B."/>
            <person name="Homs A."/>
            <person name="Santoyo J."/>
            <person name="Rigau M."/>
            <person name="Aznar-Lain G."/>
            <person name="Del Campo M."/>
            <person name="Gener B."/>
            <person name="Gabau E."/>
            <person name="Botella M.P."/>
            <person name="Gutierrez-Arumi A."/>
            <person name="Antinolo G."/>
            <person name="Perez-Jurado L.A."/>
            <person name="Cusco I."/>
        </authorList>
    </citation>
    <scope>VARIANTS 583-ARG--LYS-2005 DEL AND ARG-1372</scope>
</reference>
<reference key="55">
    <citation type="journal article" date="2015" name="Neurology">
        <title>SCN2A encephalopathy: A major cause of epilepsy of infancy with migrating focal seizures.</title>
        <authorList>
            <person name="Howell K.B."/>
            <person name="McMahon J.M."/>
            <person name="Carvill G.L."/>
            <person name="Tambunan D."/>
            <person name="Mackay M.T."/>
            <person name="Rodriguez-Casero V."/>
            <person name="Webster R."/>
            <person name="Clark D."/>
            <person name="Freeman J.L."/>
            <person name="Calvert S."/>
            <person name="Olson H.E."/>
            <person name="Mandelstam S."/>
            <person name="Poduri A."/>
            <person name="Mefford H.C."/>
            <person name="Harvey A.S."/>
            <person name="Scheffer I.E."/>
        </authorList>
    </citation>
    <scope>VARIANTS DEE11 ILE-136; LYS-218; LEU-856; ASN-905; CYS-928; ARG-1593; VAL-1634 AND GLN-1882</scope>
    <scope>VARIANT BFIS3 SER-240</scope>
    <scope>VARIANT LYS-976</scope>
</reference>
<reference key="56">
    <citation type="journal article" date="2015" name="Neuron">
        <title>Targeted DNA Sequencing from Autism Spectrum Disorder Brains Implicates Multiple Genetic Mechanisms.</title>
        <authorList>
            <person name="D'Gama A.M."/>
            <person name="Pochareddy S."/>
            <person name="Li M."/>
            <person name="Jamuar S.S."/>
            <person name="Reiff R.E."/>
            <person name="Lam A.T."/>
            <person name="Sestan N."/>
            <person name="Walsh C.A."/>
        </authorList>
    </citation>
    <scope>VARIANTS LYS-674; 1515-ARG--LYS-2005 DEL AND ARG-1744</scope>
</reference>
<reference key="57">
    <citation type="journal article" date="2016" name="Clin. Genet.">
        <title>Whole-exome sequencing improves the diagnosis yield in sporadic infantile spasm syndrome.</title>
        <authorList>
            <person name="Dimassi S."/>
            <person name="Labalme A."/>
            <person name="Ville D."/>
            <person name="Calender A."/>
            <person name="Mignot C."/>
            <person name="Boutry-Kryza N."/>
            <person name="de Bellescize J."/>
            <person name="Rivier-Ringenbach C."/>
            <person name="Bourel-Ponchel E."/>
            <person name="Cheillan D."/>
            <person name="Simonet T."/>
            <person name="Maincent K."/>
            <person name="Rossi M."/>
            <person name="Till M."/>
            <person name="Mougou-Zerelli S."/>
            <person name="Edery P."/>
            <person name="Saad A."/>
            <person name="Heron D."/>
            <person name="des Portes V."/>
            <person name="Sanlaville D."/>
            <person name="Lesca G."/>
        </authorList>
    </citation>
    <scope>VARIANT DEE11 PRO-1342</scope>
</reference>
<reference key="58">
    <citation type="journal article" date="2016" name="Eur. J. Paediatr. Neurol.">
        <title>Episodic ataxia associated with a de novo SCN2A mutation.</title>
        <authorList>
            <person name="Leach E.L."/>
            <person name="van Karnebeek C.D."/>
            <person name="Townsend K.N."/>
            <person name="Tarailo-Graovac M."/>
            <person name="Hukin J."/>
            <person name="Gibson W.T."/>
        </authorList>
    </citation>
    <scope>VARIANT EA9 ASP-1634</scope>
</reference>
<reference key="59">
    <citation type="journal article" date="2016" name="J. Med. Genet.">
        <title>Improving diagnosis and broadening the phenotypes in early-onset seizure and severe developmental delay disorders through gene panel analysis.</title>
        <authorList>
            <person name="Trump N."/>
            <person name="McTague A."/>
            <person name="Brittain H."/>
            <person name="Papandreou A."/>
            <person name="Meyer E."/>
            <person name="Ngoh A."/>
            <person name="Palmer R."/>
            <person name="Morrogh D."/>
            <person name="Boustred C."/>
            <person name="Hurst J.A."/>
            <person name="Jenkins L."/>
            <person name="Kurian M.A."/>
            <person name="Scott R.H."/>
        </authorList>
    </citation>
    <scope>VARIANTS DEE11 MET-873; ILE-987; LYS-999; VAL-999; GLN-1260; GLU-1260; 1435-ARG--LYS-2005 DEL; PRO-1479; PRO-1650; PHE-1829 AND GLN-1882</scope>
</reference>
<reference key="60">
    <citation type="journal article" date="2016" name="J. Neurol.">
        <title>Letter to the editor: confirming neonatal seizure and late onset ataxia in SCN2A Ala263Val.</title>
        <authorList>
            <person name="Johannesen K.M."/>
            <person name="Miranda M.J."/>
            <person name="Lerche H."/>
            <person name="Moeller R.S."/>
        </authorList>
    </citation>
    <scope>VARIANT EA9 VAL-263</scope>
</reference>
<reference key="61">
    <citation type="journal article" date="2016" name="Psychiatr. Genet.">
        <title>Mutation screening of SCN2A in schizophrenia and identification of a novel loss-of-function mutation.</title>
        <authorList>
            <person name="Carroll L.S."/>
            <person name="Woolf R."/>
            <person name="Ibrahim Y."/>
            <person name="Williams H.J."/>
            <person name="Dwyer S."/>
            <person name="Walters J."/>
            <person name="Kirov G."/>
            <person name="O'Donovan M.C."/>
            <person name="Owen M.J."/>
        </authorList>
    </citation>
    <scope>VARIANTS LYS-19; 169-GLU--LYS-2005 DEL; PRO-850; ARG-908; PHE-1282; VAL-1559 AND ALA-1823</scope>
</reference>
<reference key="62">
    <citation type="journal article" date="2017" name="Biol. Psychiatry">
        <title>Opposing Effects on NaV1.2 Function Underlie Differences Between SCN2A Variants Observed in Individuals With Autism Spectrum Disorder or Infantile Seizures.</title>
        <authorList>
            <person name="Ben-Shalom R."/>
            <person name="Keeshen C.M."/>
            <person name="Berrios K.N."/>
            <person name="An J.Y."/>
            <person name="Sanders S.J."/>
            <person name="Bender K.J."/>
        </authorList>
    </citation>
    <scope>VARIANTS ASN-12; GLY-82; HIS-379; CYS-937; HIS-937; 959-CYS--LYS-2005 DEL; 1013-GLY--LYS-2005 DEL; ARG-1386 AND MET-1420</scope>
    <scope>CHARACTERIZATION OF VARIANTS ASN-12; GLY-82; HIS-379; CYS-937; HIS-937; 959-CYS--LYS-2005 DEL; 1013-GLY--LYS-2005 DEL; ARG-1386 AND MET-1420</scope>
    <scope>INVOLVEMENT IN AUTISM SPECTRUM DISORDER</scope>
    <scope>FUNCTION</scope>
    <scope>TRANSPORTER ACTIVITY</scope>
</reference>
<reference key="63">
    <citation type="journal article" date="2017" name="Brain Dev.">
        <title>The therapeutic implication of a novel SCN2A mutation associated early-onset epileptic encephalopathy with Rett-like features.</title>
        <authorList>
            <person name="Liang J.S."/>
            <person name="Lin L.J."/>
            <person name="Yang M.T."/>
            <person name="Wang J.S."/>
            <person name="Lu J.F."/>
        </authorList>
    </citation>
    <scope>VARIANT MET-424</scope>
</reference>
<reference key="64">
    <citation type="journal article" date="2017" name="Hum. Mutat.">
        <title>Diagnostic targeted resequencing in 349 patients with drug-resistant pediatric epilepsies identifies causative mutations in 30 different genes.</title>
        <authorList>
            <consortium name="Clinical Study Group"/>
            <person name="Parrini E."/>
            <person name="Marini C."/>
            <person name="Mei D."/>
            <person name="Galuppi A."/>
            <person name="Cellini E."/>
            <person name="Pucatti D."/>
            <person name="Chiti L."/>
            <person name="Rutigliano D."/>
            <person name="Bianchini C."/>
            <person name="Virdo S."/>
            <person name="De Vita D."/>
            <person name="Bigoni S."/>
            <person name="Barba C."/>
            <person name="Mari F."/>
            <person name="Montomoli M."/>
            <person name="Pisano T."/>
            <person name="Rosati A."/>
            <person name="Guerrini R."/>
        </authorList>
    </citation>
    <scope>VARIANT GLY-191</scope>
    <scope>VARIANTS DEE11 ILE-251; VAL-263; VAL-896; VAL-1316; VAL-1323; TYR-1344; THR-1548 AND GLN-1882</scope>
</reference>
<reference key="65">
    <citation type="journal article" date="2017" name="Pediatr. Neurol.">
        <title>SCN2A p.Ala263Val Variant a Phenotype of Neonatal Seizures Followed by Paroxysmal Ataxia in Toddlers.</title>
        <authorList>
            <person name="Gorman K.M."/>
            <person name="King M.D."/>
        </authorList>
    </citation>
    <scope>VARIANT EA9 VAL-263</scope>
</reference>
<reference key="66">
    <citation type="journal article" date="2019" name="Brain Dev.">
        <title>Ketogenic diet as a successful early treatment modality for SCN2A mutation.</title>
        <authorList>
            <person name="Turkdogan D."/>
            <person name="Thomas G."/>
            <person name="Demirel B."/>
        </authorList>
    </citation>
    <scope>VARIANT DEE11 ILE-136</scope>
</reference>
<reference key="67">
    <citation type="journal article" date="2018" name="Brain Dev.">
        <title>SCN2A mutation in an infant presenting with migrating focal seizures and infantile spasm responsive to a ketogenic diet.</title>
        <authorList>
            <person name="Su D.J."/>
            <person name="Lu J.F."/>
            <person name="Lin L.J."/>
            <person name="Liang J.S."/>
            <person name="Hung K.L."/>
        </authorList>
    </citation>
    <scope>VARIANT DEE11 CYS-191</scope>
</reference>
<reference key="68">
    <citation type="journal article" date="2018" name="Clin. Neurol. Neurosurg.">
        <title>The finding of a new heterozygous mutation site of the SCN2A gene in a monozygotic twin family carrying and exhibiting genetic epilepsy with febrile seizures plus (GEFS+) using targeted next-generation sequencing.</title>
        <authorList>
            <person name="Liu X.W."/>
            <person name="Li W."/>
            <person name="Han T."/>
            <person name="Wei K."/>
            <person name="Qiao S."/>
            <person name="Su L."/>
            <person name="Chi Z."/>
        </authorList>
    </citation>
    <scope>VARIANT THR-467</scope>
    <scope>INVOLVEMENT IN DISEASE</scope>
</reference>
<reference key="69">
    <citation type="journal article" date="2018" name="Hum. Genome Var.">
        <title>Nonsyndromic intellectual disability with novel heterozygous SCN2A mutation and epilepsy.</title>
        <authorList>
            <person name="Yokoi T."/>
            <person name="Enomoto Y."/>
            <person name="Tsurusaki Y."/>
            <person name="Naruto T."/>
            <person name="Kurosawa K."/>
        </authorList>
    </citation>
    <scope>VARIANT ARG-1460</scope>
</reference>
<reference key="70">
    <citation type="journal article" date="2018" name="Hum. Mutat.">
        <title>Relationship of electrophysiological dysfunction and clinical severity in SCN2A-related epilepsies.</title>
        <authorList>
            <person name="Lauxmann S."/>
            <person name="Verbeek N.E."/>
            <person name="Liu Y."/>
            <person name="Zaichuk M."/>
            <person name="Mueller S."/>
            <person name="Lemke J.R."/>
            <person name="van Kempen M.J.A."/>
            <person name="Lerche H."/>
            <person name="Hedrich U.B.S."/>
        </authorList>
    </citation>
    <scope>VARIANTS BFIS3 GLU-208 AND GLU-908</scope>
    <scope>CHARACTERIZATION OF VARIANTS BFIS3 GLU-208 AND GLU-908</scope>
    <scope>VARIANT DEE11 ILE-773</scope>
    <scope>CHARACTERIZATION OF VARIANT DEE11 ILE-773</scope>
</reference>
<reference key="71">
    <citation type="journal article" date="2018" name="Neuropediatrics">
        <title>Dominant SCN2A Mutation Causes Familial Episodic Ataxia and Impairment of Speech Development.</title>
        <authorList>
            <person name="Fazeli W."/>
            <person name="Becker K."/>
            <person name="Herkenrath P."/>
            <person name="Duechting C."/>
            <person name="Koerber F."/>
            <person name="Landgraf P."/>
            <person name="Nuernberg P."/>
            <person name="Altmueller J."/>
            <person name="Thiele H."/>
            <person name="Koy A."/>
            <person name="Liebau M.C."/>
            <person name="Simon T."/>
            <person name="Doetsch J."/>
            <person name="Cirak S."/>
        </authorList>
    </citation>
    <scope>VARIANT PRO-1650</scope>
</reference>
<reference key="72">
    <citation type="journal article" date="2018" name="Proc. Natl. Acad. Sci. U.S.A.">
        <title>Dynamic action potential clamp predicts functional separation in mild familial and severe de novo forms of SCN2A epilepsy.</title>
        <authorList>
            <person name="Berecki G."/>
            <person name="Howell K.B."/>
            <person name="Deerasooriya Y.H."/>
            <person name="Cilio M.R."/>
            <person name="Oliva M.K."/>
            <person name="Kaplan D."/>
            <person name="Scheffer I.E."/>
            <person name="Berkovic S.F."/>
            <person name="Petrou S."/>
        </authorList>
    </citation>
    <scope>VARIANTS DEE11 GLN-853 AND GLN-1882</scope>
    <scope>CHARACTERIZATION OF VARIANTS DEE11 GLN-853 AND GLN-1882</scope>
    <scope>VARIANT BFIS3 VAL-1563</scope>
    <scope>CHARACTERIZATION OF VARIANT BFIS3 VAL-1563</scope>
    <scope>FUNCTION</scope>
    <scope>TRANSPORTER ACTIVITY</scope>
    <scope>SUBCELLULAR LOCATION</scope>
</reference>
<gene>
    <name evidence="76" type="primary">SCN2A</name>
    <name evidence="72" type="synonym">HBA</name>
    <name type="synonym">NAC2</name>
    <name type="synonym">SCN2A1</name>
    <name type="synonym">SCN2A2</name>
</gene>
<evidence type="ECO:0000250" key="1"/>
<evidence type="ECO:0000250" key="2">
    <source>
        <dbReference type="UniProtKB" id="B1AWN6"/>
    </source>
</evidence>
<evidence type="ECO:0000250" key="3">
    <source>
        <dbReference type="UniProtKB" id="D0E0C2"/>
    </source>
</evidence>
<evidence type="ECO:0000250" key="4">
    <source>
        <dbReference type="UniProtKB" id="P04775"/>
    </source>
</evidence>
<evidence type="ECO:0000255" key="5"/>
<evidence type="ECO:0000255" key="6">
    <source>
        <dbReference type="PROSITE-ProRule" id="PRU00116"/>
    </source>
</evidence>
<evidence type="ECO:0000256" key="7">
    <source>
        <dbReference type="SAM" id="MobiDB-lite"/>
    </source>
</evidence>
<evidence type="ECO:0000269" key="8">
    <source>
    </source>
</evidence>
<evidence type="ECO:0000269" key="9">
    <source>
    </source>
</evidence>
<evidence type="ECO:0000269" key="10">
    <source>
    </source>
</evidence>
<evidence type="ECO:0000269" key="11">
    <source>
    </source>
</evidence>
<evidence type="ECO:0000269" key="12">
    <source>
    </source>
</evidence>
<evidence type="ECO:0000269" key="13">
    <source>
    </source>
</evidence>
<evidence type="ECO:0000269" key="14">
    <source>
    </source>
</evidence>
<evidence type="ECO:0000269" key="15">
    <source>
    </source>
</evidence>
<evidence type="ECO:0000269" key="16">
    <source>
    </source>
</evidence>
<evidence type="ECO:0000269" key="17">
    <source>
    </source>
</evidence>
<evidence type="ECO:0000269" key="18">
    <source>
    </source>
</evidence>
<evidence type="ECO:0000269" key="19">
    <source>
    </source>
</evidence>
<evidence type="ECO:0000269" key="20">
    <source>
    </source>
</evidence>
<evidence type="ECO:0000269" key="21">
    <source>
    </source>
</evidence>
<evidence type="ECO:0000269" key="22">
    <source>
    </source>
</evidence>
<evidence type="ECO:0000269" key="23">
    <source>
    </source>
</evidence>
<evidence type="ECO:0000269" key="24">
    <source>
    </source>
</evidence>
<evidence type="ECO:0000269" key="25">
    <source>
    </source>
</evidence>
<evidence type="ECO:0000269" key="26">
    <source>
    </source>
</evidence>
<evidence type="ECO:0000269" key="27">
    <source>
    </source>
</evidence>
<evidence type="ECO:0000269" key="28">
    <source>
    </source>
</evidence>
<evidence type="ECO:0000269" key="29">
    <source>
    </source>
</evidence>
<evidence type="ECO:0000269" key="30">
    <source>
    </source>
</evidence>
<evidence type="ECO:0000269" key="31">
    <source>
    </source>
</evidence>
<evidence type="ECO:0000269" key="32">
    <source>
    </source>
</evidence>
<evidence type="ECO:0000269" key="33">
    <source>
    </source>
</evidence>
<evidence type="ECO:0000269" key="34">
    <source>
    </source>
</evidence>
<evidence type="ECO:0000269" key="35">
    <source>
    </source>
</evidence>
<evidence type="ECO:0000269" key="36">
    <source>
    </source>
</evidence>
<evidence type="ECO:0000269" key="37">
    <source>
    </source>
</evidence>
<evidence type="ECO:0000269" key="38">
    <source>
    </source>
</evidence>
<evidence type="ECO:0000269" key="39">
    <source>
    </source>
</evidence>
<evidence type="ECO:0000269" key="40">
    <source>
    </source>
</evidence>
<evidence type="ECO:0000269" key="41">
    <source>
    </source>
</evidence>
<evidence type="ECO:0000269" key="42">
    <source>
    </source>
</evidence>
<evidence type="ECO:0000269" key="43">
    <source>
    </source>
</evidence>
<evidence type="ECO:0000269" key="44">
    <source>
    </source>
</evidence>
<evidence type="ECO:0000269" key="45">
    <source>
    </source>
</evidence>
<evidence type="ECO:0000269" key="46">
    <source>
    </source>
</evidence>
<evidence type="ECO:0000269" key="47">
    <source>
    </source>
</evidence>
<evidence type="ECO:0000269" key="48">
    <source>
    </source>
</evidence>
<evidence type="ECO:0000269" key="49">
    <source>
    </source>
</evidence>
<evidence type="ECO:0000269" key="50">
    <source>
    </source>
</evidence>
<evidence type="ECO:0000269" key="51">
    <source>
    </source>
</evidence>
<evidence type="ECO:0000269" key="52">
    <source>
    </source>
</evidence>
<evidence type="ECO:0000269" key="53">
    <source>
    </source>
</evidence>
<evidence type="ECO:0000269" key="54">
    <source>
    </source>
</evidence>
<evidence type="ECO:0000269" key="55">
    <source>
    </source>
</evidence>
<evidence type="ECO:0000269" key="56">
    <source>
    </source>
</evidence>
<evidence type="ECO:0000269" key="57">
    <source>
    </source>
</evidence>
<evidence type="ECO:0000269" key="58">
    <source>
    </source>
</evidence>
<evidence type="ECO:0000269" key="59">
    <source>
    </source>
</evidence>
<evidence type="ECO:0000269" key="60">
    <source>
    </source>
</evidence>
<evidence type="ECO:0000269" key="61">
    <source>
    </source>
</evidence>
<evidence type="ECO:0000269" key="62">
    <source>
    </source>
</evidence>
<evidence type="ECO:0000269" key="63">
    <source>
    </source>
</evidence>
<evidence type="ECO:0000269" key="64">
    <source>
    </source>
</evidence>
<evidence type="ECO:0000269" key="65">
    <source>
    </source>
</evidence>
<evidence type="ECO:0000269" key="66">
    <source>
    </source>
</evidence>
<evidence type="ECO:0000269" key="67">
    <source>
    </source>
</evidence>
<evidence type="ECO:0000269" key="68">
    <source>
    </source>
</evidence>
<evidence type="ECO:0000269" key="69">
    <source>
    </source>
</evidence>
<evidence type="ECO:0000269" key="70">
    <source>
    </source>
</evidence>
<evidence type="ECO:0000269" key="71">
    <source>
    </source>
</evidence>
<evidence type="ECO:0000303" key="72">
    <source>
    </source>
</evidence>
<evidence type="ECO:0000305" key="73"/>
<evidence type="ECO:0000305" key="74">
    <source>
    </source>
</evidence>
<evidence type="ECO:0000305" key="75">
    <source>
    </source>
</evidence>
<evidence type="ECO:0000312" key="76">
    <source>
        <dbReference type="HGNC" id="HGNC:10588"/>
    </source>
</evidence>
<evidence type="ECO:0007744" key="77">
    <source>
        <dbReference type="PDB" id="6J8E"/>
    </source>
</evidence>
<evidence type="ECO:0007829" key="78">
    <source>
        <dbReference type="PDB" id="4JPZ"/>
    </source>
</evidence>
<evidence type="ECO:0007829" key="79">
    <source>
        <dbReference type="PDB" id="4RLY"/>
    </source>
</evidence>
<evidence type="ECO:0007829" key="80">
    <source>
        <dbReference type="PDB" id="6J8E"/>
    </source>
</evidence>
<comment type="function">
    <text evidence="2 12 17 61 66">Mediates the voltage-dependent sodium ion permeability of excitable membranes. Assuming opened or closed conformations in response to the voltage difference across the membrane, the protein forms a sodium-selective channel through which Na(+) ions may pass in accordance with their electrochemical gradient (PubMed:1325650, PubMed:17021166, PubMed:28256214, PubMed:29844171). Implicated in the regulation of hippocampal replay occurring within sharp wave ripples (SPW-R) important for memory (By similarity).</text>
</comment>
<comment type="catalytic activity">
    <reaction evidence="12 17 61 66">
        <text>Na(+)(in) = Na(+)(out)</text>
        <dbReference type="Rhea" id="RHEA:34963"/>
        <dbReference type="ChEBI" id="CHEBI:29101"/>
    </reaction>
</comment>
<comment type="subunit">
    <text evidence="37 39 62 71 75">Heterooligomer of a large alpha subunit and a smaller beta subunit. Heterooligomer with SCN2B or SCN4B; disulfide-linked. Heterooligomer with SCN1B or SCN3B; non-covalently linked. Interacts with NEDD4L. Interacts with CALM. Interacts with TMEM233 (PubMed:37117223). Interacts with the conotoxin GVIIJ (PubMed:24497506). Interacts with the spider beta/delta-theraphotoxin-Pre1a (PubMed:28428547). Interacts with the conotoxin KIIIA (PubMed:30765605). Interacts with the spider protoxin-II (PubMed:26894959).</text>
</comment>
<comment type="interaction">
    <interactant intactId="EBI-724872">
        <id>Q99250</id>
    </interactant>
    <interactant intactId="EBI-397435">
        <id>P62158</id>
        <label>CALM3</label>
    </interactant>
    <organismsDiffer>false</organismsDiffer>
    <experiments>4</experiments>
</comment>
<comment type="interaction">
    <interactant intactId="EBI-724872">
        <id>Q99250</id>
    </interactant>
    <interactant intactId="EBI-749673">
        <id>Q14576</id>
        <label>ELAVL3</label>
    </interactant>
    <organismsDiffer>false</organismsDiffer>
    <experiments>2</experiments>
</comment>
<comment type="subcellular location">
    <subcellularLocation>
        <location evidence="12 17 66">Cell membrane</location>
        <topology evidence="5">Multi-pass membrane protein</topology>
    </subcellularLocation>
</comment>
<comment type="alternative products">
    <event type="alternative splicing"/>
    <isoform>
        <id>Q99250-1</id>
        <name>1</name>
        <name>Adult</name>
        <name>6A</name>
        <sequence type="displayed"/>
    </isoform>
    <isoform>
        <id>Q99250-2</id>
        <name>2</name>
        <name>Neonatal</name>
        <name>6N</name>
        <sequence type="described" ref="VSP_001032"/>
    </isoform>
</comment>
<comment type="domain">
    <text evidence="73">The sequence contains 4 internal repeats, each with 5 hydrophobic segments (S1, S2, S3, S5, S6) and one positively charged segment (S4). Segments S4 are probably the voltage-sensors and are characterized by a series of positively charged amino acids at every third position.</text>
</comment>
<comment type="PTM">
    <text evidence="1">May be ubiquitinated by NEDD4L; which would promote its endocytosis.</text>
</comment>
<comment type="PTM">
    <text evidence="1">Phosphorylation at Ser-1506 by PKC in a highly conserved cytoplasmic loop slows inactivation of the sodium channel and reduces peak sodium currents.</text>
</comment>
<comment type="PTM">
    <text evidence="4">Sumoylated at Lys-38. Sumoylation is induced by hypoxia, increases voltage-gated sodium current and mediates the early response to acute hypoxia in neurons. Sumoylated SCN2A is located at the cell membrane.</text>
</comment>
<comment type="disease" evidence="8 10 14 16 17 18 19 22 25 29 33 48 50 66 68">
    <disease id="DI-00181">
        <name>Seizures, benign familial infantile, 3</name>
        <acronym>BFIS3</acronym>
        <description>A form of benign familial infantile epilepsy, a neurologic disorder characterized by afebrile seizures occurring in clusters during the first year of life, without neurologic sequelae. BFIS3 inheritance is autosomal dominant.</description>
        <dbReference type="MIM" id="607745"/>
    </disease>
    <text>The disease is caused by variants affecting the gene represented in this entry.</text>
</comment>
<comment type="disease" evidence="20 21 23 26 27 28 30 31 32 35 36 38 40 41 42 43 44 45 46 49 50 56 59 64 66 68 70">
    <disease id="DI-02993">
        <name>Developmental and epileptic encephalopathy 11</name>
        <acronym>DEE11</acronym>
        <description>An autosomal dominant seizure disorder characterized by neonatal or infantile onset of refractory seizures with resultant delayed neurologic development and persistent neurologic abnormalities. Patients may progress to West syndrome, which is characterized by tonic spasms with clustering, arrest of psychomotor development, and hypsarrhythmia on EEG.</description>
        <dbReference type="MIM" id="613721"/>
    </disease>
    <text>The disease is caused by variants affecting the gene represented in this entry.</text>
</comment>
<comment type="disease">
    <text evidence="65">Defects in SCN2A are associated with genetic epilepsy with febrile seizures plus (GEFS+), a familial autosomal dominant epilepsy syndrome, a clinical subset of febrile seizures, characterized by frequent episodes after 6 years of age and various types of subsequent epilepsy.</text>
</comment>
<comment type="disease">
    <text evidence="61">Defects in SCN2A are associated with autism spectrum disorders (ASD). It seems that mutations resulting in sodium channel gain of function and increased neuron excitability lead to infantile seizures, whereas variants resulting in sodium channel loss of function and decrease neuron excitability are associated with ASD.</text>
</comment>
<comment type="disease" evidence="54 57 58 60">
    <disease id="DI-05869">
        <name>Episodic ataxia 9</name>
        <acronym>EA9</acronym>
        <description>An autosomal dominant neurologic disorder characterized by episodic ataxia manifesting in the first years of life, early-onset seizures, difficulty walking, dizziness, slurred speech, headache, vomiting, and pain. The duration of ataxic episodes is heterogeneous. Most patients show episodes lasting minutes to maximum several hours, but periods lasting days up to weeks have been reported. Some patients have mildly delayed development with speech delay and/or autistic features or mildly impaired intellectual development.</description>
        <dbReference type="MIM" id="618924"/>
    </disease>
    <text>The disease is caused by variants affecting the gene represented in this entry.</text>
</comment>
<comment type="similarity">
    <text evidence="73">Belongs to the sodium channel (TC 1.A.1.10) family. Nav1.2/SCN2A subfamily.</text>
</comment>
<comment type="sequence caution" evidence="73">
    <conflict type="frameshift">
        <sequence resource="EMBL-CDS" id="CAA46438"/>
    </conflict>
</comment>
<comment type="sequence caution" evidence="73">
    <conflict type="miscellaneous discrepancy">
        <sequence resource="EMBL-CDS" id="CAA46438"/>
    </conflict>
    <text>Contaminating sequence. Sequence of unknown origin in the C-terminal part.</text>
</comment>
<proteinExistence type="evidence at protein level"/>